<keyword id="KW-0002">3D-structure</keyword>
<keyword id="KW-0007">Acetylation</keyword>
<keyword id="KW-0009">Actin-binding</keyword>
<keyword id="KW-0025">Alternative splicing</keyword>
<keyword id="KW-0965">Cell junction</keyword>
<keyword id="KW-1003">Cell membrane</keyword>
<keyword id="KW-0175">Coiled coil</keyword>
<keyword id="KW-0963">Cytoplasm</keyword>
<keyword id="KW-0206">Cytoskeleton</keyword>
<keyword id="KW-0225">Disease variant</keyword>
<keyword id="KW-1015">Disulfide bond</keyword>
<keyword id="KW-1067">Emery-Dreifuss muscular dystrophy</keyword>
<keyword id="KW-0472">Membrane</keyword>
<keyword id="KW-0496">Mitochondrion</keyword>
<keyword id="KW-0539">Nucleus</keyword>
<keyword id="KW-0597">Phosphoprotein</keyword>
<keyword id="KW-1267">Proteomics identification</keyword>
<keyword id="KW-1185">Reference proteome</keyword>
<keyword id="KW-0677">Repeat</keyword>
<keyword id="KW-0703">Sarcoplasmic reticulum</keyword>
<keyword id="KW-0812">Transmembrane</keyword>
<keyword id="KW-1133">Transmembrane helix</keyword>
<keyword id="KW-0832">Ubl conjugation</keyword>
<comment type="function">
    <text evidence="1 6 11 12 14 17 21">Multi-isomeric modular protein which forms a linking network between organelles and the actin cytoskeleton to maintain the subcellular spatial organization. As a component of the LINC (LInker of Nucleoskeleton and Cytoskeleton) complex involved in the connection between the nuclear lamina and the cytoskeleton. The nucleocytoplasmic interactions established by the LINC complex play an important role in the transmission of mechanical forces across the nuclear envelope and in nuclear movement and positioning (PubMed:34818527). Specifically, SYNE2 and SUN2 assemble in arrays of transmembrane actin-associated nuclear (TAN) lines which are bound to F-actin cables and couple the nucleus to retrograde actin flow during actin-dependent nuclear movement. May be involved in nucleus-centrosome attachment. During interkinetic nuclear migration (INM) at G2 phase and nuclear migration in neural progenitors its LINC complex association with SUN1/2 and probable association with cytoplasmic dynein-dynactin motor complexes functions to pull the nucleus toward the centrosome; SYNE1 and SYNE2 may act redundantly. During INM at G1 phase mediates respective LINC complex association with kinesin to push the nucleus away from the centrosome. Involved in nuclear migration in retinal photoreceptor progenitors. Required for centrosome migration to the apical cell surface during early ciliogenesis. Facilitates the relaxation of mechanical stress imposed by compressive actin fibers at the rupture site through its nteraction with SYN2 (PubMed:34818527).</text>
</comment>
<comment type="subunit">
    <text evidence="1 6 8 11 12 13 15 17 20 21">Core component of LINC complexes which are composed of inner nuclear membrane SUN domain-containing proteins coupled to outer nuclear membrane KASH domain-containing nesprins. SUN and KASH domain-containing proteins seem to bind each other promiscuously; however, some LINC complex constituents are tissue- or cell type-specific. At least SUN1/2-containing core LINC complexes are proposed to be hexameric composed of three protomers of each KASH and SUN domain-containing protein. The SUN2:SYNE2/KASH2 complex is a heterohexamer; the homotrimeric cloverleave-like conformation of the SUN domain is a prerequisite for LINC complex formation in which three separate SYNE2/KASH2 peptides bind at the interface of adjacent SUN domains. Interacts with EMD, LMNA, MKS3 and F-actin via its N-terminal domain. Interacts with DCTN1 and DYNC1I1/2; suggesting the association with the dynein-dynactin motor complex. Associates with kinesin motor complexes. Interacts with TMEM67. Interacts (via KASH domain) with TMEM258 (PubMed:28716842). Interacts with BROX; this interaction promotes SYN2 ubiquitination and facilitates the relaxation of mechanical stress imposed by compressive actin fibers at the rupture site (PubMed:34818527).</text>
</comment>
<comment type="interaction">
    <interactant intactId="EBI-2372294">
        <id>Q8WXH0</id>
    </interactant>
    <interactant intactId="EBI-741243">
        <id>Q9UKG1</id>
        <label>APPL1</label>
    </interactant>
    <organismsDiffer>false</organismsDiffer>
    <experiments>3</experiments>
</comment>
<comment type="interaction">
    <interactant intactId="EBI-2372294">
        <id>Q8WXH0</id>
    </interactant>
    <interactant intactId="EBI-348433">
        <id>Q9Y613</id>
        <label>FHOD1</label>
    </interactant>
    <organismsDiffer>false</organismsDiffer>
    <experiments>4</experiments>
</comment>
<comment type="interaction">
    <interactant intactId="EBI-2372294">
        <id>Q8WXH0</id>
    </interactant>
    <interactant intactId="EBI-1044964">
        <id>Q9UH99</id>
        <label>SUN2</label>
    </interactant>
    <organismsDiffer>false</organismsDiffer>
    <experiments>11</experiments>
</comment>
<comment type="interaction">
    <interactant intactId="EBI-6170976">
        <id>Q8WXH0-1</id>
    </interactant>
    <interactant intactId="EBI-351935">
        <id>P02545</id>
        <label>LMNA</label>
    </interactant>
    <organismsDiffer>false</organismsDiffer>
    <experiments>3</experiments>
</comment>
<comment type="interaction">
    <interactant intactId="EBI-6170976">
        <id>Q8WXH0-1</id>
    </interactant>
    <interactant intactId="EBI-2796904">
        <id>O94901</id>
        <label>SUN1</label>
    </interactant>
    <organismsDiffer>false</organismsDiffer>
    <experiments>2</experiments>
</comment>
<comment type="interaction">
    <interactant intactId="EBI-6170976">
        <id>Q8WXH0-1</id>
    </interactant>
    <interactant intactId="EBI-1044964">
        <id>Q9UH99</id>
        <label>SUN2</label>
    </interactant>
    <organismsDiffer>false</organismsDiffer>
    <experiments>2</experiments>
</comment>
<comment type="interaction">
    <interactant intactId="EBI-10760388">
        <id>Q8WXH0-3</id>
    </interactant>
    <interactant intactId="EBI-489887">
        <id>P50402</id>
        <label>EMD</label>
    </interactant>
    <organismsDiffer>false</organismsDiffer>
    <experiments>5</experiments>
</comment>
<comment type="interaction">
    <interactant intactId="EBI-6838657">
        <id>Q8WXH0-4</id>
    </interactant>
    <interactant intactId="EBI-6752574">
        <id>Q9D666</id>
        <label>Sun1</label>
    </interactant>
    <organismsDiffer>true</organismsDiffer>
    <experiments>2</experiments>
</comment>
<comment type="interaction">
    <interactant intactId="EBI-12303825">
        <id>Q8WXH0-8</id>
    </interactant>
    <interactant intactId="EBI-16439278">
        <id>Q6FHY5</id>
        <label>MEOX2</label>
    </interactant>
    <organismsDiffer>false</organismsDiffer>
    <experiments>3</experiments>
</comment>
<comment type="subcellular location">
    <subcellularLocation>
        <location evidence="28">Nucleus outer membrane</location>
        <topology evidence="28">Single-pass type IV membrane protein</topology>
        <orientation evidence="28">Cytoplasmic side</orientation>
    </subcellularLocation>
    <subcellularLocation>
        <location evidence="29">Sarcoplasmic reticulum membrane</location>
        <topology evidence="28">Single-pass type IV membrane protein</topology>
    </subcellularLocation>
    <subcellularLocation>
        <location evidence="28">Cell membrane</location>
        <topology evidence="28">Single-pass membrane protein</topology>
    </subcellularLocation>
    <subcellularLocation>
        <location>Cytoplasm</location>
        <location>Cytoskeleton</location>
    </subcellularLocation>
    <subcellularLocation>
        <location>Mitochondrion</location>
    </subcellularLocation>
    <subcellularLocation>
        <location>Nucleus</location>
        <location>Nucleoplasm</location>
    </subcellularLocation>
    <subcellularLocation>
        <location evidence="29">Cytoplasm</location>
        <location evidence="29">Myofibril</location>
        <location evidence="29">Sarcomere</location>
        <location evidence="29">Z line</location>
    </subcellularLocation>
    <text>Different isoform patterns are found in the different compartments of the cell. The isoforms having the C-terminal transmembrane span can be found in several organellar membranes like the nuclear envelope, the sarcoplasmic reticulum of myoblasts, or the lamellipodia and focal adhesions at the cell membrane. The largest part of the outer nuclear membrane-associated protein is cytoplasmic, while its C-terminal part is associated with the nuclear envelope, most probably the outer nuclear membrane. Remains associated with the nuclear envelope during its breakdown in mitotic cells. Shorter soluble isoforms can be found in the cytoplasm and within the nucleus.</text>
</comment>
<comment type="subcellular location">
    <molecule>Isoform 8</molecule>
    <subcellularLocation>
        <location evidence="16">Cell junction</location>
        <location evidence="16">Focal adhesion</location>
    </subcellularLocation>
    <text evidence="16">In U2OS cells.</text>
</comment>
<comment type="alternative products">
    <event type="alternative splicing"/>
    <isoform>
        <id>Q8WXH0-1</id>
        <name>1</name>
        <name>Nesprin-2 Giant</name>
        <name>NUANCE</name>
        <sequence type="displayed"/>
    </isoform>
    <isoform>
        <id>Q8WXH0-2</id>
        <name>2</name>
        <sequence type="described" ref="VSP_007164 VSP_007166"/>
    </isoform>
    <isoform>
        <id>Q8WXH0-3</id>
        <name>3</name>
        <name>epsilon2</name>
        <name>JAM19</name>
        <sequence type="described" ref="VSP_007155"/>
    </isoform>
    <isoform>
        <id>Q8WXH0-4</id>
        <name>4</name>
        <name>beta1</name>
        <sequence type="described" ref="VSP_007156"/>
    </isoform>
    <isoform>
        <id>Q8WXH0-5</id>
        <name>5</name>
        <name>alpha1</name>
        <sequence type="described" ref="VSP_007157 VSP_007164 VSP_007165"/>
    </isoform>
    <isoform>
        <id>Q8WXH0-6</id>
        <name>6</name>
        <name>alpha2</name>
        <sequence type="described" ref="VSP_007158 VSP_007165 VSP_007166"/>
    </isoform>
    <isoform>
        <id>Q8WXH0-7</id>
        <name>7</name>
        <name>Gamma</name>
        <sequence type="described" ref="VSP_007154 VSP_007163"/>
    </isoform>
    <isoform>
        <id>Q8WXH0-8</id>
        <name>8</name>
        <name>p32CH</name>
        <sequence type="described" ref="VSP_007161 VSP_007162"/>
    </isoform>
    <isoform>
        <id>Q8WXH0-9</id>
        <name>9</name>
        <name>NUANCE-N-33</name>
        <sequence type="described" ref="VSP_007159 VSP_007160"/>
    </isoform>
    <isoform>
        <id>Q8WXH0-10</id>
        <name>10</name>
        <name>beta2</name>
        <sequence type="described" ref="VSP_057484 VSP_007166"/>
    </isoform>
    <isoform>
        <id>Q8WXH0-11</id>
        <name>11</name>
        <name>FLJ56122</name>
        <sequence type="described" ref="VSP_057483 VSP_057487"/>
    </isoform>
    <isoform>
        <id>Q8WXH0-12</id>
        <name>12</name>
        <name>FLJ55476</name>
        <sequence type="described" ref="VSP_007157 VSP_007164"/>
    </isoform>
    <isoform>
        <id>Q8WXH0-13</id>
        <name>13</name>
        <name>epsilon1</name>
        <name>JAM28</name>
        <sequence type="described" ref="VSP_057485 VSP_057486"/>
    </isoform>
</comment>
<comment type="tissue specificity">
    <text evidence="8">Widely expressed, with higher level in kidney, adult and fetal liver, stomach and placenta. Weakly expressed in skeletal muscle and brain. Isoform 5 is highly expressed in pancreas, skeletal muscle and heart.</text>
</comment>
<comment type="domain">
    <text evidence="11">The KASH domain mediates the nuclear envelope targeting.</text>
</comment>
<comment type="PTM">
    <text evidence="19">The disulfid bond with SUN2 is required for stability of the SUN2:SYNE2/KASH2 LINC complex under tensile forces though not required for the interaction.</text>
</comment>
<comment type="PTM">
    <text evidence="21">Ubiquitinated, targeting it for degradation.</text>
</comment>
<comment type="disease" evidence="10">
    <disease id="DI-02520">
        <name>Emery-Dreifuss muscular dystrophy 5, autosomal dominant</name>
        <acronym>EDMD5</acronym>
        <description>A form of Emery-Dreifuss muscular dystrophy, a degenerative myopathy characterized by weakness and atrophy of muscle without involvement of the nervous system, early contractures of the elbows, Achilles tendons and spine, and cardiomyopathy associated with cardiac conduction defects.</description>
        <dbReference type="MIM" id="612999"/>
    </disease>
    <text>The disease is caused by variants affecting the gene represented in this entry.</text>
</comment>
<comment type="miscellaneous">
    <molecule>Isoform 3</molecule>
    <text evidence="28">Produced by exon skipping that results in a frameshift.</text>
</comment>
<comment type="miscellaneous">
    <molecule>Isoform 8</molecule>
    <text evidence="28">Lacks the spectrin repeats and KASH domain.</text>
</comment>
<comment type="miscellaneous">
    <molecule>Isoform 13</molecule>
    <text evidence="18">Detected only in ovary and early embryonic cells.</text>
</comment>
<comment type="similarity">
    <text evidence="28">Belongs to the nesprin family.</text>
</comment>
<comment type="sequence caution" evidence="28">
    <conflict type="erroneous initiation">
        <sequence resource="EMBL-CDS" id="BAB84881"/>
    </conflict>
    <text>Extended N-terminus.</text>
</comment>
<comment type="sequence caution" evidence="28">
    <conflict type="erroneous initiation">
        <sequence resource="EMBL-CDS" id="CAB45729"/>
    </conflict>
    <text>Truncated N-terminus.</text>
</comment>
<comment type="sequence caution" evidence="28">
    <conflict type="erroneous initiation">
        <sequence resource="EMBL-CDS" id="CAB55905"/>
    </conflict>
    <text>Extended N-terminus.</text>
</comment>
<gene>
    <name evidence="31" type="primary">SYNE2</name>
    <name type="synonym">KIAA1011</name>
    <name type="synonym">NUA</name>
</gene>
<name>SYNE2_HUMAN</name>
<evidence type="ECO:0000250" key="1">
    <source>
        <dbReference type="UniProtKB" id="Q6ZWQ0"/>
    </source>
</evidence>
<evidence type="ECO:0000255" key="2"/>
<evidence type="ECO:0000255" key="3">
    <source>
        <dbReference type="PROSITE-ProRule" id="PRU00044"/>
    </source>
</evidence>
<evidence type="ECO:0000255" key="4">
    <source>
        <dbReference type="PROSITE-ProRule" id="PRU00385"/>
    </source>
</evidence>
<evidence type="ECO:0000256" key="5">
    <source>
        <dbReference type="SAM" id="MobiDB-lite"/>
    </source>
</evidence>
<evidence type="ECO:0000269" key="6">
    <source>
    </source>
</evidence>
<evidence type="ECO:0000269" key="7">
    <source>
    </source>
</evidence>
<evidence type="ECO:0000269" key="8">
    <source>
    </source>
</evidence>
<evidence type="ECO:0000269" key="9">
    <source>
    </source>
</evidence>
<evidence type="ECO:0000269" key="10">
    <source>
    </source>
</evidence>
<evidence type="ECO:0000269" key="11">
    <source>
    </source>
</evidence>
<evidence type="ECO:0000269" key="12">
    <source>
    </source>
</evidence>
<evidence type="ECO:0000269" key="13">
    <source>
    </source>
</evidence>
<evidence type="ECO:0000269" key="14">
    <source>
    </source>
</evidence>
<evidence type="ECO:0000269" key="15">
    <source>
    </source>
</evidence>
<evidence type="ECO:0000269" key="16">
    <source>
    </source>
</evidence>
<evidence type="ECO:0000269" key="17">
    <source>
    </source>
</evidence>
<evidence type="ECO:0000269" key="18">
    <source>
    </source>
</evidence>
<evidence type="ECO:0000269" key="19">
    <source>
    </source>
</evidence>
<evidence type="ECO:0000269" key="20">
    <source>
    </source>
</evidence>
<evidence type="ECO:0000269" key="21">
    <source>
    </source>
</evidence>
<evidence type="ECO:0000303" key="22">
    <source>
    </source>
</evidence>
<evidence type="ECO:0000303" key="23">
    <source>
    </source>
</evidence>
<evidence type="ECO:0000303" key="24">
    <source>
    </source>
</evidence>
<evidence type="ECO:0000303" key="25">
    <source>
    </source>
</evidence>
<evidence type="ECO:0000303" key="26">
    <source>
    </source>
</evidence>
<evidence type="ECO:0000303" key="27">
    <source>
    </source>
</evidence>
<evidence type="ECO:0000305" key="28"/>
<evidence type="ECO:0000305" key="29">
    <source>
    </source>
</evidence>
<evidence type="ECO:0000305" key="30">
    <source>
    </source>
</evidence>
<evidence type="ECO:0000312" key="31">
    <source>
        <dbReference type="HGNC" id="HGNC:17084"/>
    </source>
</evidence>
<evidence type="ECO:0007744" key="32">
    <source>
    </source>
</evidence>
<evidence type="ECO:0007744" key="33">
    <source>
    </source>
</evidence>
<evidence type="ECO:0007744" key="34">
    <source>
    </source>
</evidence>
<evidence type="ECO:0007744" key="35">
    <source>
    </source>
</evidence>
<evidence type="ECO:0007744" key="36">
    <source>
    </source>
</evidence>
<evidence type="ECO:0007744" key="37">
    <source>
    </source>
</evidence>
<evidence type="ECO:0007829" key="38">
    <source>
        <dbReference type="PDB" id="4DXS"/>
    </source>
</evidence>
<evidence type="ECO:0007829" key="39">
    <source>
        <dbReference type="PDB" id="6XF1"/>
    </source>
</evidence>
<reference key="1">
    <citation type="journal article" date="2002" name="J. Cell Sci.">
        <title>NUANCE, a giant protein connecting the nucleus and actin cytoskeleton.</title>
        <authorList>
            <person name="Zhen Y.-Y."/>
            <person name="Libotte T."/>
            <person name="Munck M."/>
            <person name="Noegel A.A."/>
            <person name="Korenbaum E."/>
        </authorList>
    </citation>
    <scope>NUCLEOTIDE SEQUENCE [MRNA] (ISOFORMS 1 AND 9)</scope>
    <scope>FUNCTION</scope>
    <scope>CHARACTERIZATION</scope>
    <scope>INTERACTION WITH F-ACTIN</scope>
    <scope>VARIANTS THR-1969; VAL-2284; ASN-2359; THR-2395; GLY-2802; VAL-2942; HIS-3253; ARG-3309 AND MET-5186</scope>
</reference>
<reference key="2">
    <citation type="journal article" date="2001" name="J. Cell Sci.">
        <title>Nesprins: a novel family of spectrin-repeat-containing proteins that localize to the nuclear membrane in multiple tissues.</title>
        <authorList>
            <person name="Zhang Q."/>
            <person name="Skepper J.N."/>
            <person name="Yang F."/>
            <person name="Davies J.D."/>
            <person name="Hegyi L."/>
            <person name="Roberts R.G."/>
            <person name="Weissberg P.L."/>
            <person name="Ellis J.A."/>
            <person name="Shanahan C.M."/>
        </authorList>
    </citation>
    <scope>NUCLEOTIDE SEQUENCE [MRNA] (ISOFORMS 4; 5; 6; 7 AND 10)</scope>
</reference>
<reference key="3">
    <citation type="journal article" date="2002" name="Genomics">
        <title>The nesprins are giant actin-binding proteins, orthologous to Drosophila melanogaster muscle protein MSP-300.</title>
        <authorList>
            <person name="Zhang Q."/>
            <person name="Ragnauth C."/>
            <person name="Greener M.J."/>
            <person name="Shanahan C.M."/>
            <person name="Roberts R.G."/>
        </authorList>
    </citation>
    <scope>NUCLEOTIDE SEQUENCE [MRNA] (ISOFORM 1)</scope>
</reference>
<reference key="4">
    <citation type="journal article" date="2012" name="PLoS ONE">
        <title>Multiple novel nesprin-1 and nesprin-2 variants act as versatile tissue-specific intracellular scaffolds.</title>
        <authorList>
            <person name="Rajgor D."/>
            <person name="Mellad J.A."/>
            <person name="Autore F."/>
            <person name="Zhang Q."/>
            <person name="Shanahan C.M."/>
        </authorList>
    </citation>
    <scope>NUCLEOTIDE SEQUENCE [MRNA] (ISOFORM 8)</scope>
    <scope>ALTERNATIVE SPLICING</scope>
    <scope>SUBCELLULAR LOCATION (ISOFORM 8)</scope>
</reference>
<reference key="5">
    <citation type="journal article" date="2007" name="BMC Genomics">
        <title>The full-ORF clone resource of the German cDNA consortium.</title>
        <authorList>
            <person name="Bechtel S."/>
            <person name="Rosenfelder H."/>
            <person name="Duda A."/>
            <person name="Schmidt C.P."/>
            <person name="Ernst U."/>
            <person name="Wellenreuther R."/>
            <person name="Mehrle A."/>
            <person name="Schuster C."/>
            <person name="Bahr A."/>
            <person name="Bloecker H."/>
            <person name="Heubner D."/>
            <person name="Hoerlein A."/>
            <person name="Michel G."/>
            <person name="Wedler H."/>
            <person name="Koehrer K."/>
            <person name="Ottenwaelder B."/>
            <person name="Poustka A."/>
            <person name="Wiemann S."/>
            <person name="Schupp I."/>
        </authorList>
    </citation>
    <scope>NUCLEOTIDE SEQUENCE [LARGE SCALE MRNA] (ISOFORM 6)</scope>
    <source>
        <tissue>Testis</tissue>
    </source>
</reference>
<reference key="6">
    <citation type="journal article" date="2004" name="Nat. Genet.">
        <title>Complete sequencing and characterization of 21,243 full-length human cDNAs.</title>
        <authorList>
            <person name="Ota T."/>
            <person name="Suzuki Y."/>
            <person name="Nishikawa T."/>
            <person name="Otsuki T."/>
            <person name="Sugiyama T."/>
            <person name="Irie R."/>
            <person name="Wakamatsu A."/>
            <person name="Hayashi K."/>
            <person name="Sato H."/>
            <person name="Nagai K."/>
            <person name="Kimura K."/>
            <person name="Makita H."/>
            <person name="Sekine M."/>
            <person name="Obayashi M."/>
            <person name="Nishi T."/>
            <person name="Shibahara T."/>
            <person name="Tanaka T."/>
            <person name="Ishii S."/>
            <person name="Yamamoto J."/>
            <person name="Saito K."/>
            <person name="Kawai Y."/>
            <person name="Isono Y."/>
            <person name="Nakamura Y."/>
            <person name="Nagahari K."/>
            <person name="Murakami K."/>
            <person name="Yasuda T."/>
            <person name="Iwayanagi T."/>
            <person name="Wagatsuma M."/>
            <person name="Shiratori A."/>
            <person name="Sudo H."/>
            <person name="Hosoiri T."/>
            <person name="Kaku Y."/>
            <person name="Kodaira H."/>
            <person name="Kondo H."/>
            <person name="Sugawara M."/>
            <person name="Takahashi M."/>
            <person name="Kanda K."/>
            <person name="Yokoi T."/>
            <person name="Furuya T."/>
            <person name="Kikkawa E."/>
            <person name="Omura Y."/>
            <person name="Abe K."/>
            <person name="Kamihara K."/>
            <person name="Katsuta N."/>
            <person name="Sato K."/>
            <person name="Tanikawa M."/>
            <person name="Yamazaki M."/>
            <person name="Ninomiya K."/>
            <person name="Ishibashi T."/>
            <person name="Yamashita H."/>
            <person name="Murakawa K."/>
            <person name="Fujimori K."/>
            <person name="Tanai H."/>
            <person name="Kimata M."/>
            <person name="Watanabe M."/>
            <person name="Hiraoka S."/>
            <person name="Chiba Y."/>
            <person name="Ishida S."/>
            <person name="Ono Y."/>
            <person name="Takiguchi S."/>
            <person name="Watanabe S."/>
            <person name="Yosida M."/>
            <person name="Hotuta T."/>
            <person name="Kusano J."/>
            <person name="Kanehori K."/>
            <person name="Takahashi-Fujii A."/>
            <person name="Hara H."/>
            <person name="Tanase T.-O."/>
            <person name="Nomura Y."/>
            <person name="Togiya S."/>
            <person name="Komai F."/>
            <person name="Hara R."/>
            <person name="Takeuchi K."/>
            <person name="Arita M."/>
            <person name="Imose N."/>
            <person name="Musashino K."/>
            <person name="Yuuki H."/>
            <person name="Oshima A."/>
            <person name="Sasaki N."/>
            <person name="Aotsuka S."/>
            <person name="Yoshikawa Y."/>
            <person name="Matsunawa H."/>
            <person name="Ichihara T."/>
            <person name="Shiohata N."/>
            <person name="Sano S."/>
            <person name="Moriya S."/>
            <person name="Momiyama H."/>
            <person name="Satoh N."/>
            <person name="Takami S."/>
            <person name="Terashima Y."/>
            <person name="Suzuki O."/>
            <person name="Nakagawa S."/>
            <person name="Senoh A."/>
            <person name="Mizoguchi H."/>
            <person name="Goto Y."/>
            <person name="Shimizu F."/>
            <person name="Wakebe H."/>
            <person name="Hishigaki H."/>
            <person name="Watanabe T."/>
            <person name="Sugiyama A."/>
            <person name="Takemoto M."/>
            <person name="Kawakami B."/>
            <person name="Yamazaki M."/>
            <person name="Watanabe K."/>
            <person name="Kumagai A."/>
            <person name="Itakura S."/>
            <person name="Fukuzumi Y."/>
            <person name="Fujimori Y."/>
            <person name="Komiyama M."/>
            <person name="Tashiro H."/>
            <person name="Tanigami A."/>
            <person name="Fujiwara T."/>
            <person name="Ono T."/>
            <person name="Yamada K."/>
            <person name="Fujii Y."/>
            <person name="Ozaki K."/>
            <person name="Hirao M."/>
            <person name="Ohmori Y."/>
            <person name="Kawabata A."/>
            <person name="Hikiji T."/>
            <person name="Kobatake N."/>
            <person name="Inagaki H."/>
            <person name="Ikema Y."/>
            <person name="Okamoto S."/>
            <person name="Okitani R."/>
            <person name="Kawakami T."/>
            <person name="Noguchi S."/>
            <person name="Itoh T."/>
            <person name="Shigeta K."/>
            <person name="Senba T."/>
            <person name="Matsumura K."/>
            <person name="Nakajima Y."/>
            <person name="Mizuno T."/>
            <person name="Morinaga M."/>
            <person name="Sasaki M."/>
            <person name="Togashi T."/>
            <person name="Oyama M."/>
            <person name="Hata H."/>
            <person name="Watanabe M."/>
            <person name="Komatsu T."/>
            <person name="Mizushima-Sugano J."/>
            <person name="Satoh T."/>
            <person name="Shirai Y."/>
            <person name="Takahashi Y."/>
            <person name="Nakagawa K."/>
            <person name="Okumura K."/>
            <person name="Nagase T."/>
            <person name="Nomura N."/>
            <person name="Kikuchi H."/>
            <person name="Masuho Y."/>
            <person name="Yamashita R."/>
            <person name="Nakai K."/>
            <person name="Yada T."/>
            <person name="Nakamura Y."/>
            <person name="Ohara O."/>
            <person name="Isogai T."/>
            <person name="Sugano S."/>
        </authorList>
    </citation>
    <scope>NUCLEOTIDE SEQUENCE [LARGE SCALE MRNA] (ISOFORMS 3; 11 AND 12)</scope>
    <scope>NUCLEOTIDE SEQUENCE [LARGE SCALE MRNA] OF 1-956 AND 5133-6885 (ISOFORM 1)</scope>
    <scope>VARIANT MET-5186</scope>
    <source>
        <tissue>Heart</tissue>
        <tissue>Spleen</tissue>
        <tissue>Tongue</tissue>
    </source>
</reference>
<reference key="7">
    <citation type="journal article" date="2003" name="Nature">
        <title>The DNA sequence and analysis of human chromosome 14.</title>
        <authorList>
            <person name="Heilig R."/>
            <person name="Eckenberg R."/>
            <person name="Petit J.-L."/>
            <person name="Fonknechten N."/>
            <person name="Da Silva C."/>
            <person name="Cattolico L."/>
            <person name="Levy M."/>
            <person name="Barbe V."/>
            <person name="De Berardinis V."/>
            <person name="Ureta-Vidal A."/>
            <person name="Pelletier E."/>
            <person name="Vico V."/>
            <person name="Anthouard V."/>
            <person name="Rowen L."/>
            <person name="Madan A."/>
            <person name="Qin S."/>
            <person name="Sun H."/>
            <person name="Du H."/>
            <person name="Pepin K."/>
            <person name="Artiguenave F."/>
            <person name="Robert C."/>
            <person name="Cruaud C."/>
            <person name="Bruels T."/>
            <person name="Jaillon O."/>
            <person name="Friedlander L."/>
            <person name="Samson G."/>
            <person name="Brottier P."/>
            <person name="Cure S."/>
            <person name="Segurens B."/>
            <person name="Aniere F."/>
            <person name="Samain S."/>
            <person name="Crespeau H."/>
            <person name="Abbasi N."/>
            <person name="Aiach N."/>
            <person name="Boscus D."/>
            <person name="Dickhoff R."/>
            <person name="Dors M."/>
            <person name="Dubois I."/>
            <person name="Friedman C."/>
            <person name="Gouyvenoux M."/>
            <person name="James R."/>
            <person name="Madan A."/>
            <person name="Mairey-Estrada B."/>
            <person name="Mangenot S."/>
            <person name="Martins N."/>
            <person name="Menard M."/>
            <person name="Oztas S."/>
            <person name="Ratcliffe A."/>
            <person name="Shaffer T."/>
            <person name="Trask B."/>
            <person name="Vacherie B."/>
            <person name="Bellemere C."/>
            <person name="Belser C."/>
            <person name="Besnard-Gonnet M."/>
            <person name="Bartol-Mavel D."/>
            <person name="Boutard M."/>
            <person name="Briez-Silla S."/>
            <person name="Combette S."/>
            <person name="Dufosse-Laurent V."/>
            <person name="Ferron C."/>
            <person name="Lechaplais C."/>
            <person name="Louesse C."/>
            <person name="Muselet D."/>
            <person name="Magdelenat G."/>
            <person name="Pateau E."/>
            <person name="Petit E."/>
            <person name="Sirvain-Trukniewicz P."/>
            <person name="Trybou A."/>
            <person name="Vega-Czarny N."/>
            <person name="Bataille E."/>
            <person name="Bluet E."/>
            <person name="Bordelais I."/>
            <person name="Dubois M."/>
            <person name="Dumont C."/>
            <person name="Guerin T."/>
            <person name="Haffray S."/>
            <person name="Hammadi R."/>
            <person name="Muanga J."/>
            <person name="Pellouin V."/>
            <person name="Robert D."/>
            <person name="Wunderle E."/>
            <person name="Gauguet G."/>
            <person name="Roy A."/>
            <person name="Sainte-Marthe L."/>
            <person name="Verdier J."/>
            <person name="Verdier-Discala C."/>
            <person name="Hillier L.W."/>
            <person name="Fulton L."/>
            <person name="McPherson J."/>
            <person name="Matsuda F."/>
            <person name="Wilson R."/>
            <person name="Scarpelli C."/>
            <person name="Gyapay G."/>
            <person name="Wincker P."/>
            <person name="Saurin W."/>
            <person name="Quetier F."/>
            <person name="Waterston R."/>
            <person name="Hood L."/>
            <person name="Weissenbach J."/>
        </authorList>
    </citation>
    <scope>NUCLEOTIDE SEQUENCE [LARGE SCALE GENOMIC DNA]</scope>
</reference>
<reference key="8">
    <citation type="journal article" date="2004" name="Genome Res.">
        <title>The status, quality, and expansion of the NIH full-length cDNA project: the Mammalian Gene Collection (MGC).</title>
        <authorList>
            <consortium name="The MGC Project Team"/>
        </authorList>
    </citation>
    <scope>NUCLEOTIDE SEQUENCE [LARGE SCALE MRNA] (ISOFORM 8)</scope>
    <scope>NUCLEOTIDE SEQUENCE [LARGE SCALE MRNA] OF 1-88 (ISOFORM 3)</scope>
    <scope>NUCLEOTIDE SEQUENCE [LARGE SCALE MRNA] OF 1-196 (ISOFORM 13)</scope>
    <source>
        <tissue>Brain</tissue>
        <tissue>Ovary</tissue>
    </source>
</reference>
<reference key="9">
    <citation type="journal article" date="1999" name="DNA Res.">
        <title>Prediction of the coding sequences of unidentified human genes. XIII. The complete sequences of 100 new cDNA clones from brain which code for large proteins in vitro.</title>
        <authorList>
            <person name="Nagase T."/>
            <person name="Ishikawa K."/>
            <person name="Suyama M."/>
            <person name="Kikuno R."/>
            <person name="Hirosawa M."/>
            <person name="Miyajima N."/>
            <person name="Tanaka A."/>
            <person name="Kotani H."/>
            <person name="Nomura N."/>
            <person name="Ohara O."/>
        </authorList>
    </citation>
    <scope>NUCLEOTIDE SEQUENCE [LARGE SCALE MRNA] OF 3367-6885 (ISOFORM 2)</scope>
    <source>
        <tissue>Brain</tissue>
    </source>
</reference>
<reference key="10">
    <citation type="journal article" date="2002" name="DNA Res.">
        <title>Construction of expression-ready cDNA clones for KIAA genes: manual curation of 330 KIAA cDNA clones.</title>
        <authorList>
            <person name="Nakajima D."/>
            <person name="Okazaki N."/>
            <person name="Yamakawa H."/>
            <person name="Kikuno R."/>
            <person name="Ohara O."/>
            <person name="Nagase T."/>
        </authorList>
    </citation>
    <scope>SEQUENCE REVISION</scope>
</reference>
<reference key="11">
    <citation type="submission" date="2005-08" db="EMBL/GenBank/DDBJ databases">
        <authorList>
            <person name="Ohara O."/>
            <person name="Nagase T."/>
            <person name="Kikuno R."/>
        </authorList>
    </citation>
    <scope>SEQUENCE REVISION</scope>
</reference>
<reference key="12">
    <citation type="journal article" date="2001" name="Genome Res.">
        <title>Towards a catalog of human genes and proteins: sequencing and analysis of 500 novel complete protein coding human cDNAs.</title>
        <authorList>
            <person name="Wiemann S."/>
            <person name="Weil B."/>
            <person name="Wellenreuther R."/>
            <person name="Gassenhuber J."/>
            <person name="Glassl S."/>
            <person name="Ansorge W."/>
            <person name="Boecher M."/>
            <person name="Bloecker H."/>
            <person name="Bauersachs S."/>
            <person name="Blum H."/>
            <person name="Lauber J."/>
            <person name="Duesterhoeft A."/>
            <person name="Beyer A."/>
            <person name="Koehrer K."/>
            <person name="Strack N."/>
            <person name="Mewes H.-W."/>
            <person name="Ottenwaelder B."/>
            <person name="Obermaier B."/>
            <person name="Tampe J."/>
            <person name="Heubner D."/>
            <person name="Wambutt R."/>
            <person name="Korn B."/>
            <person name="Klein M."/>
            <person name="Poustka A."/>
        </authorList>
    </citation>
    <scope>NUCLEOTIDE SEQUENCE [LARGE SCALE MRNA] OF 5754-6885</scope>
</reference>
<reference key="13">
    <citation type="journal article" date="2003" name="Science">
        <title>Nuclear membrane proteins with potential disease links found by subtractive proteomics.</title>
        <authorList>
            <person name="Schirmer E.C."/>
            <person name="Florens L."/>
            <person name="Guan T."/>
            <person name="Yates J.R. III"/>
            <person name="Gerace L."/>
        </authorList>
    </citation>
    <scope>IDENTIFICATION BY MASS SPECTROMETRY</scope>
    <scope>SUBCELLULAR LOCATION</scope>
</reference>
<reference key="14">
    <citation type="journal article" date="2005" name="J. Cell Sci.">
        <title>Nesprin-2 is a multi-isomeric protein that binds lamin and emerin at the nuclear envelope and forms a subcellular network in skeletal muscle.</title>
        <authorList>
            <person name="Zhang Q."/>
            <person name="Ragnauth C.D."/>
            <person name="Skepper J.N."/>
            <person name="Worth N.F."/>
            <person name="Warren D.T."/>
            <person name="Roberts R.G."/>
            <person name="Weissberg P.L."/>
            <person name="Ellis J.A."/>
            <person name="Shanahan C.M."/>
        </authorList>
    </citation>
    <scope>TISSUE SPECIFICITY</scope>
    <scope>SUBCELLULAR LOCATION</scope>
    <scope>INTERACTION WITH EMD AND LMNA</scope>
</reference>
<reference key="15">
    <citation type="journal article" date="2008" name="Exp. Cell Res.">
        <title>Structural requirements for the assembly of LINC complexes and their function in cellular mechanical stiffness.</title>
        <authorList>
            <person name="Stewart-Hutchinson P.J."/>
            <person name="Hale C.M."/>
            <person name="Wirtz D."/>
            <person name="Hodzic D."/>
        </authorList>
    </citation>
    <scope>FUNCTION</scope>
    <scope>DOMAIN</scope>
    <scope>INTERACTION WITH SUN1 AND SUN2</scope>
</reference>
<reference key="16">
    <citation type="journal article" date="2008" name="Proc. Natl. Acad. Sci. U.S.A.">
        <title>A quantitative atlas of mitotic phosphorylation.</title>
        <authorList>
            <person name="Dephoure N."/>
            <person name="Zhou C."/>
            <person name="Villen J."/>
            <person name="Beausoleil S.A."/>
            <person name="Bakalarski C.E."/>
            <person name="Elledge S.J."/>
            <person name="Gygi S.P."/>
        </authorList>
    </citation>
    <scope>PHOSPHORYLATION [LARGE SCALE ANALYSIS] AT SER-4108</scope>
    <scope>IDENTIFICATION BY MASS SPECTROMETRY [LARGE SCALE ANALYSIS]</scope>
    <source>
        <tissue>Cervix carcinoma</tissue>
    </source>
</reference>
<reference key="17">
    <citation type="journal article" date="2009" name="J. Cell Sci.">
        <title>Nesprin-2 interacts with meckelin and mediates ciliogenesis via remodelling of the actin cytoskeleton.</title>
        <authorList>
            <person name="Dawe H.R."/>
            <person name="Adams M."/>
            <person name="Wheway G."/>
            <person name="Szymanska K."/>
            <person name="Logan C.V."/>
            <person name="Noegel A.A."/>
            <person name="Gull K."/>
            <person name="Johnson C.A."/>
        </authorList>
    </citation>
    <scope>SUBCELLULAR LOCATION</scope>
    <scope>INTERACTION WITH MKS3</scope>
    <scope>FUNCTION</scope>
</reference>
<reference key="18">
    <citation type="journal article" date="2009" name="Sci. Signal.">
        <title>Quantitative phosphoproteomic analysis of T cell receptor signaling reveals system-wide modulation of protein-protein interactions.</title>
        <authorList>
            <person name="Mayya V."/>
            <person name="Lundgren D.H."/>
            <person name="Hwang S.-I."/>
            <person name="Rezaul K."/>
            <person name="Wu L."/>
            <person name="Eng J.K."/>
            <person name="Rodionov V."/>
            <person name="Han D.K."/>
        </authorList>
    </citation>
    <scope>PHOSPHORYLATION [LARGE SCALE ANALYSIS] AT SER-4108</scope>
    <scope>IDENTIFICATION BY MASS SPECTROMETRY [LARGE SCALE ANALYSIS]</scope>
    <source>
        <tissue>Leukemic T-cell</tissue>
    </source>
</reference>
<reference key="19">
    <citation type="journal article" date="2009" name="Science">
        <title>Lysine acetylation targets protein complexes and co-regulates major cellular functions.</title>
        <authorList>
            <person name="Choudhary C."/>
            <person name="Kumar C."/>
            <person name="Gnad F."/>
            <person name="Nielsen M.L."/>
            <person name="Rehman M."/>
            <person name="Walther T.C."/>
            <person name="Olsen J.V."/>
            <person name="Mann M."/>
        </authorList>
    </citation>
    <scope>ACETYLATION [LARGE SCALE ANALYSIS] AT LYS-955</scope>
    <scope>IDENTIFICATION BY MASS SPECTROMETRY [LARGE SCALE ANALYSIS]</scope>
</reference>
<reference key="20">
    <citation type="journal article" date="2010" name="J. Biol. Chem.">
        <title>Mammalian SUN protein interaction networks at the inner nuclear membrane and their role in laminopathy disease processes.</title>
        <authorList>
            <person name="Haque F."/>
            <person name="Mazzeo D."/>
            <person name="Patel J.T."/>
            <person name="Smallwood D.T."/>
            <person name="Ellis J.A."/>
            <person name="Shanahan C.M."/>
            <person name="Shackleton S."/>
        </authorList>
    </citation>
    <scope>INTERACTION WITH SUN1 AND SUN2</scope>
</reference>
<reference key="21">
    <citation type="journal article" date="2010" name="Sci. Signal.">
        <title>Quantitative phosphoproteomics reveals widespread full phosphorylation site occupancy during mitosis.</title>
        <authorList>
            <person name="Olsen J.V."/>
            <person name="Vermeulen M."/>
            <person name="Santamaria A."/>
            <person name="Kumar C."/>
            <person name="Miller M.L."/>
            <person name="Jensen L.J."/>
            <person name="Gnad F."/>
            <person name="Cox J."/>
            <person name="Jensen T.S."/>
            <person name="Nigg E.A."/>
            <person name="Brunak S."/>
            <person name="Mann M."/>
        </authorList>
    </citation>
    <scope>PHOSPHORYLATION [LARGE SCALE ANALYSIS] AT SER-2781 AND SER-6361</scope>
    <scope>IDENTIFICATION BY MASS SPECTROMETRY [LARGE SCALE ANALYSIS]</scope>
    <source>
        <tissue>Cervix carcinoma</tissue>
    </source>
</reference>
<reference key="22">
    <citation type="journal article" date="2010" name="Science">
        <title>Linear arrays of nuclear envelope proteins harness retrograde actin flow for nuclear movement.</title>
        <authorList>
            <person name="Luxton G.W."/>
            <person name="Gomes E.R."/>
            <person name="Folker E.S."/>
            <person name="Vintinner E."/>
            <person name="Gundersen G.G."/>
        </authorList>
    </citation>
    <scope>FUNCTION</scope>
</reference>
<reference key="23">
    <citation type="journal article" date="2011" name="BMC Syst. Biol.">
        <title>Initial characterization of the human central proteome.</title>
        <authorList>
            <person name="Burkard T.R."/>
            <person name="Planyavsky M."/>
            <person name="Kaupe I."/>
            <person name="Breitwieser F.P."/>
            <person name="Buerckstuemmer T."/>
            <person name="Bennett K.L."/>
            <person name="Superti-Furga G."/>
            <person name="Colinge J."/>
        </authorList>
    </citation>
    <scope>IDENTIFICATION BY MASS SPECTROMETRY [LARGE SCALE ANALYSIS]</scope>
</reference>
<reference key="24">
    <citation type="journal article" date="2011" name="Sci. Signal.">
        <title>System-wide temporal characterization of the proteome and phosphoproteome of human embryonic stem cell differentiation.</title>
        <authorList>
            <person name="Rigbolt K.T."/>
            <person name="Prokhorova T.A."/>
            <person name="Akimov V."/>
            <person name="Henningsen J."/>
            <person name="Johansen P.T."/>
            <person name="Kratchmarova I."/>
            <person name="Kassem M."/>
            <person name="Mann M."/>
            <person name="Olsen J.V."/>
            <person name="Blagoev B."/>
        </authorList>
    </citation>
    <scope>PHOSPHORYLATION [LARGE SCALE ANALYSIS] AT SER-2781</scope>
    <scope>IDENTIFICATION BY MASS SPECTROMETRY [LARGE SCALE ANALYSIS]</scope>
</reference>
<reference key="25">
    <citation type="journal article" date="2013" name="J. Proteome Res.">
        <title>Toward a comprehensive characterization of a human cancer cell phosphoproteome.</title>
        <authorList>
            <person name="Zhou H."/>
            <person name="Di Palma S."/>
            <person name="Preisinger C."/>
            <person name="Peng M."/>
            <person name="Polat A.N."/>
            <person name="Heck A.J."/>
            <person name="Mohammed S."/>
        </authorList>
    </citation>
    <scope>IDENTIFICATION BY MASS SPECTROMETRY [LARGE SCALE ANALYSIS]</scope>
    <source>
        <tissue>Cervix carcinoma</tissue>
    </source>
</reference>
<reference key="26">
    <citation type="journal article" date="2013" name="PLoS ONE">
        <title>Large-scale modelling of the divergent spectrin repeats in nesprins: giant modular proteins.</title>
        <authorList>
            <person name="Autore F."/>
            <person name="Pfuhl M."/>
            <person name="Quan X."/>
            <person name="Williams A."/>
            <person name="Roberts R.G."/>
            <person name="Shanahan C.M."/>
            <person name="Fraternali F."/>
        </authorList>
    </citation>
    <scope>SPECTRIN REPEATS</scope>
</reference>
<reference key="27">
    <citation type="journal article" date="2014" name="J. Proteomics">
        <title>An enzyme assisted RP-RPLC approach for in-depth analysis of human liver phosphoproteome.</title>
        <authorList>
            <person name="Bian Y."/>
            <person name="Song C."/>
            <person name="Cheng K."/>
            <person name="Dong M."/>
            <person name="Wang F."/>
            <person name="Huang J."/>
            <person name="Sun D."/>
            <person name="Wang L."/>
            <person name="Ye M."/>
            <person name="Zou H."/>
        </authorList>
    </citation>
    <scope>PHOSPHORYLATION [LARGE SCALE ANALYSIS] AT SER-841; SER-5785; SER-6361 AND SER-6459</scope>
    <scope>IDENTIFICATION BY MASS SPECTROMETRY [LARGE SCALE ANALYSIS]</scope>
    <source>
        <tissue>Liver</tissue>
    </source>
</reference>
<reference key="28">
    <citation type="journal article" date="2014" name="PLoS ONE">
        <title>Nesprins: tissue-specific expression of epsilon and other short isoforms.</title>
        <authorList>
            <person name="Duong N.T."/>
            <person name="Morris G.E."/>
            <person name="Lam le T."/>
            <person name="Zhang Q."/>
            <person name="Sewry C.A."/>
            <person name="Shanahan C.M."/>
            <person name="Holt I."/>
        </authorList>
    </citation>
    <scope>ALTERNATIVE SPLICING (ISOFORMS 3 AND 13)</scope>
</reference>
<reference key="29">
    <citation type="journal article" date="2015" name="Biophys. J.">
        <title>A disulfide bond is required for the transmission of forces through SUN-KASH complexes.</title>
        <authorList>
            <person name="Jahed Z."/>
            <person name="Shams H."/>
            <person name="Mofrad M.R."/>
        </authorList>
    </citation>
    <scope>SUBUNIT</scope>
    <scope>DISULFIDE BOND</scope>
</reference>
<reference key="30">
    <citation type="journal article" date="2017" name="J. Cell Biol.">
        <title>Outer nuclear membrane protein Kuduk modulates the LINC complex and nuclear envelope architecture.</title>
        <authorList>
            <person name="Ding Z.Y."/>
            <person name="Wang Y.H."/>
            <person name="Huang Y.C."/>
            <person name="Lee M.C."/>
            <person name="Tseng M.J."/>
            <person name="Chi Y.H."/>
            <person name="Huang M.L."/>
        </authorList>
    </citation>
    <scope>INTERACTION WITH TMEM258</scope>
</reference>
<reference key="31">
    <citation type="journal article" date="2021" name="Dev. Cell">
        <title>The ESCRT machinery counteracts Nesprin-2G-mediated mechanical forces during nuclear envelope repair.</title>
        <authorList>
            <person name="Wallis S.S."/>
            <person name="Ventimiglia L.N."/>
            <person name="Otigbah E."/>
            <person name="Infante E."/>
            <person name="Cuesta-Geijo M.A."/>
            <person name="Kidiyoor G.R."/>
            <person name="Carbajal M.A."/>
            <person name="Fleck R.A."/>
            <person name="Foiani M."/>
            <person name="Garcia-Manyes S."/>
            <person name="Martin-Serrano J."/>
            <person name="Agromayor M."/>
        </authorList>
    </citation>
    <scope>FUNCTION</scope>
    <scope>INTERACTION WITH BROX</scope>
    <scope>UBIQUITINATION</scope>
</reference>
<reference key="32">
    <citation type="journal article" date="2012" name="Cell">
        <title>LINC complexes form by binding of three KASH peptides to domain interfaces of trimeric SUN proteins.</title>
        <authorList>
            <person name="Sosa B.A."/>
            <person name="Rothballer A."/>
            <person name="Kutay U."/>
            <person name="Schwartz T.U."/>
        </authorList>
    </citation>
    <scope>X-RAY CRYSTALLOGRAPHY (2.7 ANGSTROMS) OF 6857-6885 IN COMPLEX WITH SUN2</scope>
    <scope>SUBUNIT</scope>
    <scope>MUTAGENESIS OF LEU-6876; TYR-6878 AND PRO-6883</scope>
</reference>
<reference key="33">
    <citation type="journal article" date="2012" name="Cell Res.">
        <title>Structural insights into SUN-KASH complexes across the nuclear envelope.</title>
        <authorList>
            <person name="Wang W."/>
            <person name="Shi Z."/>
            <person name="Jiao S."/>
            <person name="Chen C."/>
            <person name="Wang H."/>
            <person name="Liu G."/>
            <person name="Wang Q."/>
            <person name="Zhao Y."/>
            <person name="Greene M.I."/>
            <person name="Zhou Z."/>
        </authorList>
    </citation>
    <scope>X-RAY CRYSTALLOGRAPHY (3.05 ANGSTROMS) OF 6872-6885 IN COMPLEX WITH SUN2</scope>
    <scope>FUNCTION</scope>
</reference>
<reference key="34">
    <citation type="journal article" date="2006" name="Science">
        <title>The consensus coding sequences of human breast and colorectal cancers.</title>
        <authorList>
            <person name="Sjoeblom T."/>
            <person name="Jones S."/>
            <person name="Wood L.D."/>
            <person name="Parsons D.W."/>
            <person name="Lin J."/>
            <person name="Barber T.D."/>
            <person name="Mandelker D."/>
            <person name="Leary R.J."/>
            <person name="Ptak J."/>
            <person name="Silliman N."/>
            <person name="Szabo S."/>
            <person name="Buckhaults P."/>
            <person name="Farrell C."/>
            <person name="Meeh P."/>
            <person name="Markowitz S.D."/>
            <person name="Willis J."/>
            <person name="Dawson D."/>
            <person name="Willson J.K.V."/>
            <person name="Gazdar A.F."/>
            <person name="Hartigan J."/>
            <person name="Wu L."/>
            <person name="Liu C."/>
            <person name="Parmigiani G."/>
            <person name="Park B.H."/>
            <person name="Bachman K.E."/>
            <person name="Papadopoulos N."/>
            <person name="Vogelstein B."/>
            <person name="Kinzler K.W."/>
            <person name="Velculescu V.E."/>
        </authorList>
    </citation>
    <scope>VARIANTS [LARGE SCALE ANALYSIS] ILE-5940 AND CYS-6200</scope>
</reference>
<reference key="35">
    <citation type="journal article" date="2007" name="Hum. Mol. Genet.">
        <title>Nesprin-1 and -2 are involved in the pathogenesis of Emery Dreifuss muscular dystrophy and are critical for nuclear envelope integrity.</title>
        <authorList>
            <person name="Zhang Q."/>
            <person name="Bethmann C."/>
            <person name="Worth N.F."/>
            <person name="Davies J.D."/>
            <person name="Wasner C."/>
            <person name="Feuer A."/>
            <person name="Ragnauth C.D."/>
            <person name="Yi Q."/>
            <person name="Mellad J.A."/>
            <person name="Warren D.T."/>
            <person name="Wheeler M.A."/>
            <person name="Ellis J.A."/>
            <person name="Skepper J.N."/>
            <person name="Vorgerd M."/>
            <person name="Schlotter-Weigel B."/>
            <person name="Weissberg P.L."/>
            <person name="Roberts R.G."/>
            <person name="Wehnert M."/>
            <person name="Shanahan C.M."/>
        </authorList>
    </citation>
    <scope>VARIANT EDMD5 MET-6211</scope>
</reference>
<sequence length="6885" mass="796442">MASSPELPTEDEQGSWGIDDLHISLQAEQEDTQKKAFTCWINSQLARHTSPSVISDLFTDIKKGHVLLDLLEVLSGQQLPRDKGSNTFQCRINIEHALTFLRNRSIKLINIHVTDIIDGNPSIILGLIWTIILHFHIEKLAQTLSCNYNQPSLDDVSVVDSSPASSPPAKKCSKVQARWQMSARKALLLWAQEQCATYESVNVTDFKSSWRNGMAFLAIIHALRPDLIDMKSVKHRSNKDNLREAFRIAEQELKIPRLLEPEDVDVVDPDEKSIMTYVAQFLQYSKDAPGTGEEAQGKVKDAMGWLTLQKEKLQKLLKDSENDTYFKKYNSLLSFMESFNEEKKSFLDVLSIKRDLDELDKDHLQLREAWDGLDHQINAWKIKLNYALPPPLHQTEAWLQEVEELMDEDLSASQDHSQAVTLIQEKMTLFKSLMDRFEHHSNILLTFENKDENHLPLVPPNKLEEMKRRINNILEKKFILLLEFHYYKCLVLGLVDEVKSKLDIWNIKYGSRESVELLLEDWHKFIEEKEFLARLDTSFQKCGEIYKNLAGECQNINKQYMMVKSDVCMYRKNIYNVKSTLQKVLACWATYVENLRLLRACFEETKKEEIKEVPFETLAQWNLEHATLNEAGNFLVEVSNDVVGSSISKELRRLNKRWRKLVSKTQLEMNLPLMIKKQDQPTFDNSGNILSKEEKATVEFSTDMSVELPENYNQNIKAGEKHEKENEEFTGQLKVAKDVEKLIGQVEIWEAEAKSVLDQDDVDTSMEESLKHLIAKGSMFDELMARSEDMLQMDIQNISSQESFQHVLTTGLQAKIQEAKEKVQINVVKLIAALKNLTDVSPDLDIRLKMEESQKELESYMMRAQQLLGQRESPGELISKHKEALIISNTKSLAKYLKAVEELKNNVTEDIKMSLEEKSRDVCAKWESLHHELSLYVQQLKIDIEKGKLSDNILKLEKQINKEKKLIRRGRTKGLIKEHEACFSEEGCLYQLNHHMEVLRELCEELPSQKSQQEVKRLLKDYEQKIERLLKCASEIHMTLQPTAGGTSKNEGTITTSENRGGDPHSEAPFAKSDNQPSTEKAMEPTMKFSLASVLRPLQEESIMEKDYSASINSLLERYDTYRDILEHHLQNNKFRITSDFSSEEDRSSSCLQAKLTDLQVIKNETDARWKEFEIISLKLENHVNDIKKPFVIKERDTLKERERELQMTLNTRMESLETALRLVLPVEKASLLLCGSDLPLHKMAIQGFHLIDADRIYQHLRNIQDSIAKQIEICNRLEEPGNFVLKELHPFDLHAMQNIILKYKTQFEGMNHRVQRSEDTLKALEDFLASLRTAKLSAEPVTDLSASDTQVAQENTLTVKNKEGEIHLMKDKAKHLDKCLKMLDMSFKDAERGDDTSCENLLDAFSIKLSETHGYGVQEEFTEENKLLEACIFKNNELLKNIQDVQSQISKIGLKDPTVPAVKHRKKSLIRLDKVLDEYEEEKRHLQEMANSLPHFKDGREKTVNQQCQNTVVLWENTKALVTECLEQCGRVLELLKQYQNFKSILTTLIQKEESVISLQASYMGKENLKKRIAEIEIVKEEFNEHLEVVDKINQVCKNLQFYLNKMKTFEEPPFEKEANIIVDRWLDINEKTEDYYENLGRALALWDKLFNLKNVIDEWTEKALQKMELHQLTEEDRERLKEELQVHEQKTSEFSRRVAEIQFLLQSSEIPLELQVMESSILNKMEHVQKCLTGESNCHALSGSTAELREDLDQAKTQIGMTESLLKALSPSDSLEIFTKLEEIQQQILQQKHSMILLENQIGCLTPELSELKKQYESVSDLFNTKKSVLQDHFSKLLNDQCKNFNDWFSNIKVNLKECFESSETKKSVEQKLQKLSDFLTLEGRNSKIKQVDSVLKHVKKHLPKAHVKELISWLVGQEFELEKMESICQARAKELEDSLQQLLRLQDDHRNLRKWLTNQEEKWKGMEEPGEKTELFCQALARKREQFESVAQLNNSLKEYGFTEEEEIIMEATCLMDRYQTLLRQLSEIEEEDKLLPTEDQSFNDLAHDVIHWIKEIKESLMVLNSSEGKMPLEERIQKIKEIILLKPEGDARIETIMKQAESSEAPLVQKTLTDISNQWDNTLHLASTYLSHQEKLLLEGEKYLQSKEDLRLMLIELKKKQEAGFALQHGLQEKKAQLKIYKKFLKKAQDLTSLLKELKSQGNYLLECTKNPSFSEEPWLEIKHLHESLLQQLQDSVQNLDGHVREHDSYQVCVTDLNTTLDNFSKEFVSFSDKPVDQIAVEEKLQKLQELENRLSLQDGTLKKILALAKSVKQNTSSVGQKIIKDDIKSLQCKQKDLENRLASAKQEMECCLNSILKSKRSTEKKGKFTLPGREKQATSDVQESTQESAAVEKLEEDWEINKDSAVEMAMSKQLSLNAQESMKNTEDERKVNELQNQPLELDTMLRNEQLEEIEKLYTQLEAKKAAIKPLEQTECLNKTETGALVLHNIGYSAQHLDNLLQALITLKKNKESQYCVLRDFQEYLAAVESSMKALLTDKESLKVGPLDSVTYLDKIKKFIASIEKEKDSLGNLKIKWENLSNHVTDMDKKLLESQIKQLEHGWEQVEQQIQKKYSQQVVEYDEFTTLMNKVQDTEISLQQQQQHLQLRLKSPEERAGNQSMIALTTDLQATKHGFSVLKGQAELQMKRIWGEKEKKNLEDGINNLKKQWETLEPLHLEAENQIKKCDIRNKMKETILWAKNLLGELNPSIPLLPDDILSQIRKCKVTHDGILARQQSVESLAEEVKDKVPSLTTYEGSDLNNTLEDLRNQYQMLVLKSTQRSQQLEFKLEERSNFFAIIRKFQLMVQESETLIIPRVETAATEAELKHHHVTLEASQKELQEIDSGISTHLQELTNIYEELNVFERLFLEDQLKNLKIRTNRIQRFIQNTCNEVEHKIKFCRQFHEKTSALQEEADSIQRNELLLNQEVNKGVKEEIYNLKDRLTAIKCCILQVLKLKKVFDYIGLNWDFSQLDQLQTQVFEKEKELEEKIKQLDTFEEEHGKYQALLSKMRAIDLQIKKMTEVVLKAPDSSPESRRLNAQILSQRIEKAKCLCDEIIKKLNENKTFDDSFKEKEILQIKLNAEENDKLYKVLQNMVLELSPKELDEKNCQDKLETSLHVLNQIKSQLQQPLLINLEIKHIQNEKDNCEAFQEQVWAEMCSIKAVTAIEKQREENSSEASDVETKLREFEDLQMQLNTSIDLRTNVLNDAYENLTRYKEAVTRAVESITSLEAIIIPYRVDVGNPEESLEMPLRKQEELESTVAHIQDLTEKLGMISSPEAKLQLQYTLQELVSKNSAMKEAFKAQETEAERYLENYKCYRKMEEDIYTNLSKMETVLGQSMSSLPLSYREALERLEQSKALVSNLISTKEELMKLRQILRLLRLRCTENDGICLLKIVSALWEKWLSLLEAAKEWEMWCEELKQEWKFVSEEIEREAIILDNLQEELPEISKTKEAATTEELSELLDCLCQYGENVEKQQLLLTLLLQRIRSIQNVPESSGAVETVPAFQEITSMKERCNKLLQKVQKNKELVQTEIQERHSFTKEIIALKNFFQQTTTSFQNMAFQDHPEKSEQFEELQSILKKGKLTFENIMEKLRIKYSEMYTIVPAEIESQVEECRKALEDIDEKISNEVLKSSPSYAMRRKIEEINNGLHNVEKMLQQKSKNIEKAQEIQKKMWDELDLWHSKLNELDSEVQDIVEQDPGQAQEWMDNLMIPFQQYQQVSQRAECRTSQLNKATVKMEEYSDLLKSTEAWIENTSHLLANPADYDSLRTLSHHASTVQMALEDSEQKHNLLHSIFMDLEDLSIIFETDELTQSIQELSNQVTALQQKIMESLPQIQRMADDVVAIESEVKSMEKRVSKIKTILLSKEIFDFSPEEHLKHGEVILENIRPMKKTIAEIVSYQVELRLPQTGMKPLPVFQRTNQLLQDIKLLENVTQEQNELLKVVIKQTNEWDEEIENLKQILNNYSAQFSLEHMSPDQADKLPQLQGEIERMEKQILSLNQRKEDLLVDLKATVLNLHQHLKQEQEGVERDRLPAVTSEEGGVAERDASERKLNRRGSMSYLAAVEEEVEESSVKSDNGDEKAEPSPQSWSSLWKHDKDMEEDRASSSSGTIVQEAYGKISTSDNSMAQILTPDSLNTEQGPECSLRPNQTEEGTTPPIEADTLDSSDAQGGLEPRVEKTRPEPTEVLHACKTQVAELELWLQQANVAVEPETLNADMQQVLEQQLVGCQAMLTEIEHKVAFLLETCKDQGLGDNGATQHEAEALSLKLKTVKCNLEKVQMMLQEKHSEDQHPTILKKSSEPEHQEALQPVNLSELESIVTERPQFSRQKDFQQQQVLELKPMEQKDFIKFIEFNAKKMWPQYCQHDNDTTQESSASNQASSPENDVPDSILSPQGQNGDKWQYLHHELSSKIKLPLPQLVEPQVSTNMGILPSVTMYNFRYPTTEELKTYTTQLEDLRQEASNLQTQENMTEEAYINLDKKLFELFLTLSQCLSSVEEMLEMPRLYREDGSGQQVHYETLALELKKLYLALSDKKGDLLKAMTWPGENTNLLLECFDNLQVCLEHTQAAAVCRSKSLKAGLDYNRSYQNEIKRLYHQLIKSKTSLQQSLNEISGQSVAEQLQKADAYTVELENAESRVAKLRDEGERLHLPYALLQEVYKLEDVLDSMWGMLRARYTELSSPFVTESQQDALLQGMVELVKIGKEKLAHGHLKQTKSKVALQAQIENHKVFFQKLVADMLLIQAYSAKILPSLLQNRETFWAEQVTEVKILEEKSRQCGMKLQSLLQKWEEFDENYASLEKDLEILISTLPSVSLVEETEERLVERISFYQQIKRNIGGKHARLYQTLNEGKQLVASVSCPELEGQIAKLEEQWLSLNKKIDHELHRLQALLKHLLSYNRDSDQLTKWLESSQHTLNYWKEQSLNVSQDLDTIRSNINNFFEFSKEVDEKSSLKTAVISIGNQLLHLKETDTATLRASLAQFEQKWTMLITQLPDIQEKLHQLQMEKLPSRKAITEMISWMNNVEHQTSDEDSVHSPSSASQVKHLLQKHKEFRMEMDYKQWIVDFVNQSLLQLSTCDVESKRYERTEFAEHLGEMNRQWHRVHGMLNRKIQHLEQLLESITESENKIQILNNWLEAQEERLKTLQKPESVISVQKLLLDCQDIENQLAIKSKALDELKQSYLTLESGAVPLLEDTASRIDELFQKRSSVLTQVNQLKTSMQSVLQEWKIYDQLYDEVNMMTIRFWYCMEHSKPVVLSLETLRCQVENLQSLQDEAESSEGSWEKLQEVIGKLKGLCPSVAEIIEEKCQNTHKRWTQVNQAIADQLQKAQSLLQLWKAYSNAHGEAAARLKQQEAKFQQLANISMSGNNLAEILPPALQDIKELQHDVQKTKEAFLQNSSVLDRLPQPAESSTHMLLPGPLHSLQRAAYLEKMLLVKANEFEFVLSQFKDFGVRLESLKGLIMHEEENLDRLHQQEKENPDSFLNHVLALTAQSPDIEHLNEVSLKLPLSDVAVKTLQNMNRQWIRATATALERCSELQGIGLNEKFLYCCEKWIQLLEKIEEALKVDVANSLPELLEQQKTYKMLEAEVSINQTIADSYVTQSLQLLDTTEIENRPEFITEFSKLTDRWQNAVQGVRQRKGDVDGLVRQWQDFTTSVENLFRFLTDTSHLLSAVKGQERFSLYQTRSLIHELKNKEIHFQRRRTTCALTLEAGEKLLLTTDLKTKESVGRRISQLQDSWKDMEPQLAEMIKQFQSTVETWDQCEKKIKELKSRLQVLKAQSEDPLPELHEDLHNEKELIKELEQSLASWTQNLKELQTMKADLTRHVLVEDVMVLKEQIEHLHRQWEDLCLRVAIRKQEIEDRLNTWVVFNEKNKELCAWLVQMENKVLQTADISIEEMIEKLQKDCMEEINLFSENKLQLKQMGDQLIKASNKSRAAEIDDKLNKINDRWQHLFDVIGSRVKKLKETFAFIQQLDKNMSNLRTWLARIESELSKPVVYDVCDDQEIQKRLAEQQDLQRDIEQHSAGVESVFNICDVLLHDSDACANETECDSIQQTTRSLDRRWRNICAMSMERRMKIEETWRLWQKFLDDYSRFEDWLKSAERTAACPNSSEVLYTSAKEELKRFEAFQRQIHERLTQLELINKQYRRLARENRTDTASRLKQMVHEGNQRWDNLQRRVTAVLRRLRHFTNQREEFEGTRESILVWLTEMDLQLTNVEHFSESDADDKMRQLNGFQQEITLNTNKIDQLIVFGEQLIQKSEPLDAVLIEDELEELHRYCQEVFGRVSRFHRRLTSCTPGLEDEKEASENETDMEDPREIQTDSWRKRGESEEPSSPQSLCHLVAPGHERSGCETPVSVDSIPLEWDHTGDVGGSSSHEEDEEGPYYSALSGKSISDGHSWHVPDSPSCPEHHYKQMEGDRNVPPVPPASSTPYKPPYGKLLLPPGTDGGKEGPRVLNGNPQQEDGGLAGITEQQSGAFDRWEMIQAQELHNKLKIKQNLQQLNSDISAITTWLKKTEAELEMLKMAKPPSDIQEIELRVKRLQEILKAFDTYKALVVSVNVSSKEFLQTESPESTELQSRLRQLSLLWEAAQGAVDSWRGGLRQSLMQCQDFHQLSQNLLLWLASAKNRRQKAHVTDPKADPRALLECRRELMQLEKELVERQPQVDMLQEISNSLLIKGHGEDCIEAEEKVHVIEKKLKQLREQVSQDLMALQGTQNPASPLPSFDEVDSGDQPPATSVPAPRAKQFRAVRTTEGEEETESRVPGSTRPQRSFLSRVVRAALPLQLLLLLLLLLACLLPSSEEDYSCTQANNFARSFYPMLRYTNGPPPT</sequence>
<dbReference type="EMBL" id="AF435010">
    <property type="protein sequence ID" value="AAL33547.1"/>
    <property type="molecule type" value="mRNA"/>
</dbReference>
<dbReference type="EMBL" id="AF435011">
    <property type="protein sequence ID" value="AAL33548.1"/>
    <property type="molecule type" value="mRNA"/>
</dbReference>
<dbReference type="EMBL" id="AY061757">
    <property type="protein sequence ID" value="AAL33800.1"/>
    <property type="molecule type" value="mRNA"/>
</dbReference>
<dbReference type="EMBL" id="AY061758">
    <property type="protein sequence ID" value="AAL33801.1"/>
    <property type="molecule type" value="mRNA"/>
</dbReference>
<dbReference type="EMBL" id="AY061759">
    <property type="protein sequence ID" value="AAL33802.1"/>
    <property type="molecule type" value="mRNA"/>
</dbReference>
<dbReference type="EMBL" id="AY184204">
    <property type="protein sequence ID" value="AAO27772.1"/>
    <property type="molecule type" value="mRNA"/>
</dbReference>
<dbReference type="EMBL" id="AY184205">
    <property type="protein sequence ID" value="AAO27773.1"/>
    <property type="molecule type" value="mRNA"/>
</dbReference>
<dbReference type="EMBL" id="AF495911">
    <property type="protein sequence ID" value="AAN60443.1"/>
    <property type="molecule type" value="mRNA"/>
</dbReference>
<dbReference type="EMBL" id="JQ754367">
    <property type="protein sequence ID" value="AFN44385.1"/>
    <property type="molecule type" value="mRNA"/>
</dbReference>
<dbReference type="EMBL" id="AL117404">
    <property type="protein sequence ID" value="CAB55905.2"/>
    <property type="status" value="ALT_INIT"/>
    <property type="molecule type" value="mRNA"/>
</dbReference>
<dbReference type="EMBL" id="AK074055">
    <property type="protein sequence ID" value="BAB84881.1"/>
    <property type="status" value="ALT_INIT"/>
    <property type="molecule type" value="mRNA"/>
</dbReference>
<dbReference type="EMBL" id="AK090430">
    <property type="protein sequence ID" value="BAC03411.1"/>
    <property type="molecule type" value="mRNA"/>
</dbReference>
<dbReference type="EMBL" id="AK095241">
    <property type="protein sequence ID" value="BAC04506.1"/>
    <property type="molecule type" value="mRNA"/>
</dbReference>
<dbReference type="EMBL" id="AK297874">
    <property type="protein sequence ID" value="BAG60199.1"/>
    <property type="molecule type" value="mRNA"/>
</dbReference>
<dbReference type="EMBL" id="AK298465">
    <property type="protein sequence ID" value="BAG60678.1"/>
    <property type="molecule type" value="mRNA"/>
</dbReference>
<dbReference type="EMBL" id="AL162832">
    <property type="status" value="NOT_ANNOTATED_CDS"/>
    <property type="molecule type" value="Genomic_DNA"/>
</dbReference>
<dbReference type="EMBL" id="AL355094">
    <property type="status" value="NOT_ANNOTATED_CDS"/>
    <property type="molecule type" value="Genomic_DNA"/>
</dbReference>
<dbReference type="EMBL" id="AL359235">
    <property type="status" value="NOT_ANNOTATED_CDS"/>
    <property type="molecule type" value="Genomic_DNA"/>
</dbReference>
<dbReference type="EMBL" id="BC042134">
    <property type="protein sequence ID" value="AAH42134.1"/>
    <property type="molecule type" value="mRNA"/>
</dbReference>
<dbReference type="EMBL" id="BC071873">
    <property type="protein sequence ID" value="AAH71873.1"/>
    <property type="molecule type" value="mRNA"/>
</dbReference>
<dbReference type="EMBL" id="BM805144">
    <property type="status" value="NOT_ANNOTATED_CDS"/>
    <property type="molecule type" value="mRNA"/>
</dbReference>
<dbReference type="EMBL" id="CD654909">
    <property type="status" value="NOT_ANNOTATED_CDS"/>
    <property type="molecule type" value="mRNA"/>
</dbReference>
<dbReference type="EMBL" id="AB023228">
    <property type="protein sequence ID" value="BAA76855.3"/>
    <property type="molecule type" value="mRNA"/>
</dbReference>
<dbReference type="EMBL" id="AL080133">
    <property type="protein sequence ID" value="CAB45729.1"/>
    <property type="status" value="ALT_INIT"/>
    <property type="molecule type" value="mRNA"/>
</dbReference>
<dbReference type="CCDS" id="CCDS41963.1">
    <molecule id="Q8WXH0-1"/>
</dbReference>
<dbReference type="CCDS" id="CCDS45124.1">
    <molecule id="Q8WXH0-5"/>
</dbReference>
<dbReference type="CCDS" id="CCDS9761.2">
    <molecule id="Q8WXH0-2"/>
</dbReference>
<dbReference type="PIR" id="T12520">
    <property type="entry name" value="T12520"/>
</dbReference>
<dbReference type="PIR" id="T17215">
    <property type="entry name" value="T17215"/>
</dbReference>
<dbReference type="RefSeq" id="NP_055995.4">
    <molecule id="Q8WXH0-1"/>
    <property type="nucleotide sequence ID" value="NM_015180.4"/>
</dbReference>
<dbReference type="RefSeq" id="NP_878914.1">
    <molecule id="Q8WXH0-6"/>
    <property type="nucleotide sequence ID" value="NM_182910.2"/>
</dbReference>
<dbReference type="RefSeq" id="NP_878917.1">
    <molecule id="Q8WXH0-5"/>
    <property type="nucleotide sequence ID" value="NM_182913.4"/>
</dbReference>
<dbReference type="RefSeq" id="NP_878918.2">
    <molecule id="Q8WXH0-2"/>
    <property type="nucleotide sequence ID" value="NM_182914.3"/>
</dbReference>
<dbReference type="PDB" id="4DXS">
    <property type="method" value="X-ray"/>
    <property type="resolution" value="2.71 A"/>
    <property type="chains" value="B=6857-6885"/>
</dbReference>
<dbReference type="PDB" id="4FI9">
    <property type="method" value="X-ray"/>
    <property type="resolution" value="3.05 A"/>
    <property type="chains" value="B=6872-6885"/>
</dbReference>
<dbReference type="PDB" id="6XF1">
    <property type="method" value="X-ray"/>
    <property type="resolution" value="2.80 A"/>
    <property type="chains" value="A/C=1425-1649"/>
</dbReference>
<dbReference type="PDBsum" id="4DXS"/>
<dbReference type="PDBsum" id="4FI9"/>
<dbReference type="PDBsum" id="6XF1"/>
<dbReference type="SMR" id="Q8WXH0"/>
<dbReference type="BioGRID" id="116830">
    <property type="interactions" value="190"/>
</dbReference>
<dbReference type="ComplexPortal" id="CPX-7669">
    <property type="entry name" value="LINC complex, SUN2-SYNE2 variant"/>
</dbReference>
<dbReference type="ComplexPortal" id="CPX-7670">
    <property type="entry name" value="LINC complex, SUN1-SYNE2 variant"/>
</dbReference>
<dbReference type="CORUM" id="Q8WXH0"/>
<dbReference type="DIP" id="DIP-53409N"/>
<dbReference type="ELM" id="Q8WXH0"/>
<dbReference type="FunCoup" id="Q8WXH0">
    <property type="interactions" value="1258"/>
</dbReference>
<dbReference type="IntAct" id="Q8WXH0">
    <property type="interactions" value="78"/>
</dbReference>
<dbReference type="MINT" id="Q8WXH0"/>
<dbReference type="STRING" id="9606.ENSP00000350719"/>
<dbReference type="CarbonylDB" id="Q8WXH0"/>
<dbReference type="GlyCosmos" id="Q8WXH0">
    <property type="glycosylation" value="6 sites, 2 glycans"/>
</dbReference>
<dbReference type="GlyGen" id="Q8WXH0">
    <property type="glycosylation" value="10 sites, 3 N-linked glycans (3 sites), 2 O-linked glycans (6 sites)"/>
</dbReference>
<dbReference type="iPTMnet" id="Q8WXH0"/>
<dbReference type="PhosphoSitePlus" id="Q8WXH0"/>
<dbReference type="SwissPalm" id="Q8WXH0"/>
<dbReference type="BioMuta" id="SYNE2"/>
<dbReference type="DMDM" id="116242809"/>
<dbReference type="jPOST" id="Q8WXH0"/>
<dbReference type="MassIVE" id="Q8WXH0"/>
<dbReference type="PaxDb" id="9606-ENSP00000350719"/>
<dbReference type="PeptideAtlas" id="Q8WXH0"/>
<dbReference type="ProteomicsDB" id="70449"/>
<dbReference type="ProteomicsDB" id="75044">
    <molecule id="Q8WXH0-1"/>
</dbReference>
<dbReference type="ProteomicsDB" id="75045">
    <molecule id="Q8WXH0-2"/>
</dbReference>
<dbReference type="ProteomicsDB" id="75046">
    <molecule id="Q8WXH0-3"/>
</dbReference>
<dbReference type="ProteomicsDB" id="75047">
    <molecule id="Q8WXH0-4"/>
</dbReference>
<dbReference type="ProteomicsDB" id="75048">
    <molecule id="Q8WXH0-5"/>
</dbReference>
<dbReference type="ProteomicsDB" id="75049">
    <molecule id="Q8WXH0-6"/>
</dbReference>
<dbReference type="ProteomicsDB" id="75050">
    <molecule id="Q8WXH0-7"/>
</dbReference>
<dbReference type="ProteomicsDB" id="75051">
    <molecule id="Q8WXH0-8"/>
</dbReference>
<dbReference type="ProteomicsDB" id="75052">
    <molecule id="Q8WXH0-9"/>
</dbReference>
<dbReference type="Pumba" id="Q8WXH0"/>
<dbReference type="Antibodypedia" id="189">
    <property type="antibodies" value="185 antibodies from 22 providers"/>
</dbReference>
<dbReference type="DNASU" id="23224"/>
<dbReference type="Ensembl" id="ENST00000341472.9">
    <molecule id="Q8WXH0-8"/>
    <property type="protein sequence ID" value="ENSP00000344528.5"/>
    <property type="gene ID" value="ENSG00000054654.20"/>
</dbReference>
<dbReference type="Ensembl" id="ENST00000344113.8">
    <molecule id="Q8WXH0-1"/>
    <property type="protein sequence ID" value="ENSP00000341781.4"/>
    <property type="gene ID" value="ENSG00000054654.20"/>
</dbReference>
<dbReference type="Ensembl" id="ENST00000358025.7">
    <molecule id="Q8WXH0-2"/>
    <property type="protein sequence ID" value="ENSP00000350719.3"/>
    <property type="gene ID" value="ENSG00000054654.20"/>
</dbReference>
<dbReference type="Ensembl" id="ENST00000458046.6">
    <molecule id="Q8WXH0-5"/>
    <property type="protein sequence ID" value="ENSP00000391937.2"/>
    <property type="gene ID" value="ENSG00000054654.20"/>
</dbReference>
<dbReference type="Ensembl" id="ENST00000555002.6">
    <molecule id="Q8WXH0-2"/>
    <property type="protein sequence ID" value="ENSP00000450831.2"/>
    <property type="gene ID" value="ENSG00000054654.20"/>
</dbReference>
<dbReference type="GeneID" id="23224"/>
<dbReference type="KEGG" id="hsa:23224"/>
<dbReference type="MANE-Select" id="ENST00000555002.6">
    <molecule id="Q8WXH0-2"/>
    <property type="protein sequence ID" value="ENSP00000450831.2"/>
    <property type="RefSeq nucleotide sequence ID" value="NM_182914.3"/>
    <property type="RefSeq protein sequence ID" value="NP_878918.2"/>
</dbReference>
<dbReference type="UCSC" id="uc001xgk.4">
    <molecule id="Q8WXH0-1"/>
    <property type="organism name" value="human"/>
</dbReference>
<dbReference type="UCSC" id="uc001xgr.5">
    <property type="organism name" value="human"/>
</dbReference>
<dbReference type="AGR" id="HGNC:17084"/>
<dbReference type="CTD" id="23224"/>
<dbReference type="DisGeNET" id="23224"/>
<dbReference type="GeneCards" id="SYNE2"/>
<dbReference type="HGNC" id="HGNC:17084">
    <property type="gene designation" value="SYNE2"/>
</dbReference>
<dbReference type="HPA" id="ENSG00000054654">
    <property type="expression patterns" value="Tissue enhanced (skeletal)"/>
</dbReference>
<dbReference type="MalaCards" id="SYNE2"/>
<dbReference type="MIM" id="608442">
    <property type="type" value="gene"/>
</dbReference>
<dbReference type="MIM" id="612999">
    <property type="type" value="phenotype"/>
</dbReference>
<dbReference type="neXtProt" id="NX_Q8WXH0"/>
<dbReference type="OpenTargets" id="ENSG00000054654"/>
<dbReference type="Orphanet" id="98853">
    <property type="disease" value="Autosomal dominant Emery-Dreifuss muscular dystrophy"/>
</dbReference>
<dbReference type="PharmGKB" id="PA128394613"/>
<dbReference type="VEuPathDB" id="HostDB:ENSG00000054654"/>
<dbReference type="eggNOG" id="KOG0516">
    <property type="taxonomic scope" value="Eukaryota"/>
</dbReference>
<dbReference type="GeneTree" id="ENSGT00940000154656"/>
<dbReference type="HOGENOM" id="CLU_000034_2_0_1"/>
<dbReference type="InParanoid" id="Q8WXH0"/>
<dbReference type="OMA" id="GKDHKSP"/>
<dbReference type="OrthoDB" id="18853at2759"/>
<dbReference type="PAN-GO" id="Q8WXH0">
    <property type="GO annotations" value="0 GO annotations based on evolutionary models"/>
</dbReference>
<dbReference type="PhylomeDB" id="Q8WXH0"/>
<dbReference type="TreeFam" id="TF329280"/>
<dbReference type="PathwayCommons" id="Q8WXH0"/>
<dbReference type="Reactome" id="R-HSA-1221632">
    <property type="pathway name" value="Meiotic synapsis"/>
</dbReference>
<dbReference type="SignaLink" id="Q8WXH0"/>
<dbReference type="SIGNOR" id="Q8WXH0"/>
<dbReference type="BioGRID-ORCS" id="23224">
    <property type="hits" value="10 hits in 1156 CRISPR screens"/>
</dbReference>
<dbReference type="ChiTaRS" id="SYNE2">
    <property type="organism name" value="human"/>
</dbReference>
<dbReference type="EvolutionaryTrace" id="Q8WXH0"/>
<dbReference type="GeneWiki" id="SYNE2"/>
<dbReference type="GenomeRNAi" id="23224"/>
<dbReference type="Pharos" id="Q8WXH0">
    <property type="development level" value="Tbio"/>
</dbReference>
<dbReference type="PRO" id="PR:Q8WXH0"/>
<dbReference type="Proteomes" id="UP000005640">
    <property type="component" value="Chromosome 14"/>
</dbReference>
<dbReference type="RNAct" id="Q8WXH0">
    <property type="molecule type" value="protein"/>
</dbReference>
<dbReference type="Bgee" id="ENSG00000054654">
    <property type="expression patterns" value="Expressed in ventricular zone and 204 other cell types or tissues"/>
</dbReference>
<dbReference type="ExpressionAtlas" id="Q8WXH0">
    <property type="expression patterns" value="baseline and differential"/>
</dbReference>
<dbReference type="GO" id="GO:0005929">
    <property type="term" value="C:cilium"/>
    <property type="evidence" value="ECO:0000314"/>
    <property type="project" value="HPA"/>
</dbReference>
<dbReference type="GO" id="GO:0005737">
    <property type="term" value="C:cytoplasm"/>
    <property type="evidence" value="ECO:0000314"/>
    <property type="project" value="UniProtKB"/>
</dbReference>
<dbReference type="GO" id="GO:0070062">
    <property type="term" value="C:extracellular exosome"/>
    <property type="evidence" value="ECO:0007005"/>
    <property type="project" value="UniProtKB"/>
</dbReference>
<dbReference type="GO" id="GO:0001650">
    <property type="term" value="C:fibrillar center"/>
    <property type="evidence" value="ECO:0000314"/>
    <property type="project" value="HPA"/>
</dbReference>
<dbReference type="GO" id="GO:0031527">
    <property type="term" value="C:filopodium membrane"/>
    <property type="evidence" value="ECO:0000314"/>
    <property type="project" value="UniProtKB"/>
</dbReference>
<dbReference type="GO" id="GO:0005925">
    <property type="term" value="C:focal adhesion"/>
    <property type="evidence" value="ECO:0000314"/>
    <property type="project" value="UniProtKB"/>
</dbReference>
<dbReference type="GO" id="GO:0045111">
    <property type="term" value="C:intermediate filament cytoskeleton"/>
    <property type="evidence" value="ECO:0000314"/>
    <property type="project" value="HPA"/>
</dbReference>
<dbReference type="GO" id="GO:0031258">
    <property type="term" value="C:lamellipodium membrane"/>
    <property type="evidence" value="ECO:0000314"/>
    <property type="project" value="UniProtKB"/>
</dbReference>
<dbReference type="GO" id="GO:0034993">
    <property type="term" value="C:meiotic nuclear membrane microtubule tethering complex"/>
    <property type="evidence" value="ECO:0000314"/>
    <property type="project" value="UniProtKB"/>
</dbReference>
<dbReference type="GO" id="GO:0005739">
    <property type="term" value="C:mitochondrion"/>
    <property type="evidence" value="ECO:0000314"/>
    <property type="project" value="UniProtKB"/>
</dbReference>
<dbReference type="GO" id="GO:0005635">
    <property type="term" value="C:nuclear envelope"/>
    <property type="evidence" value="ECO:0000314"/>
    <property type="project" value="UniProtKB"/>
</dbReference>
<dbReference type="GO" id="GO:0031981">
    <property type="term" value="C:nuclear lumen"/>
    <property type="evidence" value="ECO:0000314"/>
    <property type="project" value="UniProtKB"/>
</dbReference>
<dbReference type="GO" id="GO:0031965">
    <property type="term" value="C:nuclear membrane"/>
    <property type="evidence" value="ECO:0000314"/>
    <property type="project" value="HPA"/>
</dbReference>
<dbReference type="GO" id="GO:0005640">
    <property type="term" value="C:nuclear outer membrane"/>
    <property type="evidence" value="ECO:0007669"/>
    <property type="project" value="UniProtKB-SubCell"/>
</dbReference>
<dbReference type="GO" id="GO:0005654">
    <property type="term" value="C:nucleoplasm"/>
    <property type="evidence" value="ECO:0007669"/>
    <property type="project" value="UniProtKB-SubCell"/>
</dbReference>
<dbReference type="GO" id="GO:0005634">
    <property type="term" value="C:nucleus"/>
    <property type="evidence" value="ECO:0000314"/>
    <property type="project" value="CACAO"/>
</dbReference>
<dbReference type="GO" id="GO:0016529">
    <property type="term" value="C:sarcoplasmic reticulum"/>
    <property type="evidence" value="ECO:0000314"/>
    <property type="project" value="UniProtKB"/>
</dbReference>
<dbReference type="GO" id="GO:0033017">
    <property type="term" value="C:sarcoplasmic reticulum membrane"/>
    <property type="evidence" value="ECO:0007669"/>
    <property type="project" value="UniProtKB-SubCell"/>
</dbReference>
<dbReference type="GO" id="GO:0030018">
    <property type="term" value="C:Z disc"/>
    <property type="evidence" value="ECO:0000314"/>
    <property type="project" value="UniProtKB"/>
</dbReference>
<dbReference type="GO" id="GO:0003779">
    <property type="term" value="F:actin binding"/>
    <property type="evidence" value="ECO:0000250"/>
    <property type="project" value="UniProtKB"/>
</dbReference>
<dbReference type="GO" id="GO:0140444">
    <property type="term" value="F:cytoskeleton-nuclear membrane anchor activity"/>
    <property type="evidence" value="ECO:0000314"/>
    <property type="project" value="GO_Central"/>
</dbReference>
<dbReference type="GO" id="GO:0051642">
    <property type="term" value="P:centrosome localization"/>
    <property type="evidence" value="ECO:0000315"/>
    <property type="project" value="UniProtKB"/>
</dbReference>
<dbReference type="GO" id="GO:0007097">
    <property type="term" value="P:nuclear migration"/>
    <property type="evidence" value="ECO:0000315"/>
    <property type="project" value="UniProtKB"/>
</dbReference>
<dbReference type="GO" id="GO:0031022">
    <property type="term" value="P:nuclear migration along microfilament"/>
    <property type="evidence" value="ECO:0000250"/>
    <property type="project" value="UniProtKB"/>
</dbReference>
<dbReference type="GO" id="GO:0021817">
    <property type="term" value="P:nucleokinesis involved in cell motility in cerebral cortex radial glia guided migration"/>
    <property type="evidence" value="ECO:0007669"/>
    <property type="project" value="Ensembl"/>
</dbReference>
<dbReference type="GO" id="GO:0030335">
    <property type="term" value="P:positive regulation of cell migration"/>
    <property type="evidence" value="ECO:0000250"/>
    <property type="project" value="UniProtKB"/>
</dbReference>
<dbReference type="GO" id="GO:1902017">
    <property type="term" value="P:regulation of cilium assembly"/>
    <property type="evidence" value="ECO:0007669"/>
    <property type="project" value="Ensembl"/>
</dbReference>
<dbReference type="CDD" id="cd21242">
    <property type="entry name" value="CH_SYNE2_rpt1"/>
    <property type="match status" value="1"/>
</dbReference>
<dbReference type="CDD" id="cd21244">
    <property type="entry name" value="CH_SYNE2_rpt2"/>
    <property type="match status" value="1"/>
</dbReference>
<dbReference type="CDD" id="cd00176">
    <property type="entry name" value="SPEC"/>
    <property type="match status" value="5"/>
</dbReference>
<dbReference type="FunFam" id="1.20.58.60:FF:000041">
    <property type="entry name" value="Nesprin-1 isoform 1"/>
    <property type="match status" value="1"/>
</dbReference>
<dbReference type="FunFam" id="1.20.58.60:FF:000073">
    <property type="entry name" value="Nesprin-1 isoform 1"/>
    <property type="match status" value="1"/>
</dbReference>
<dbReference type="FunFam" id="1.20.58.60:FF:000427">
    <property type="entry name" value="Nesprin-2"/>
    <property type="match status" value="1"/>
</dbReference>
<dbReference type="FunFam" id="1.10.418.10:FF:000050">
    <property type="entry name" value="nesprin-2 isoform X2"/>
    <property type="match status" value="1"/>
</dbReference>
<dbReference type="FunFam" id="1.20.58.60:FF:000115">
    <property type="entry name" value="nesprin-2 isoform X2"/>
    <property type="match status" value="1"/>
</dbReference>
<dbReference type="FunFam" id="1.10.418.10:FF:000053">
    <property type="entry name" value="nesprin-2 isoform X3"/>
    <property type="match status" value="1"/>
</dbReference>
<dbReference type="FunFam" id="1.20.58.60:FF:000173">
    <property type="entry name" value="Spectrin repeat containing nuclear envelope protein 2"/>
    <property type="match status" value="1"/>
</dbReference>
<dbReference type="FunFam" id="1.20.58.60:FF:000180">
    <property type="entry name" value="Spectrin repeat containing nuclear envelope protein 2"/>
    <property type="match status" value="1"/>
</dbReference>
<dbReference type="FunFam" id="1.20.58.60:FF:000211">
    <property type="entry name" value="Spectrin repeat containing nuclear envelope protein 2"/>
    <property type="match status" value="1"/>
</dbReference>
<dbReference type="FunFam" id="1.20.58.60:FF:000271">
    <property type="entry name" value="Spectrin repeat containing nuclear envelope protein 2"/>
    <property type="match status" value="1"/>
</dbReference>
<dbReference type="FunFam" id="1.20.58.60:FF:000404">
    <property type="entry name" value="Spectrin repeat containing nuclear envelope protein 2"/>
    <property type="match status" value="1"/>
</dbReference>
<dbReference type="FunFam" id="1.20.58.60:FF:000477">
    <property type="entry name" value="Spectrin repeat containing nuclear envelope protein 2"/>
    <property type="match status" value="1"/>
</dbReference>
<dbReference type="FunFam" id="1.20.58.60:FF:000174">
    <property type="entry name" value="Spectrin repeat-containing, nuclear envelope 2"/>
    <property type="match status" value="1"/>
</dbReference>
<dbReference type="FunFam" id="1.20.58.60:FF:000217">
    <property type="entry name" value="Synaptic nuclear envelope 2"/>
    <property type="match status" value="1"/>
</dbReference>
<dbReference type="Gene3D" id="1.20.58.60">
    <property type="match status" value="13"/>
</dbReference>
<dbReference type="Gene3D" id="1.10.418.10">
    <property type="entry name" value="Calponin-like domain"/>
    <property type="match status" value="2"/>
</dbReference>
<dbReference type="InterPro" id="IPR001589">
    <property type="entry name" value="Actinin_actin-bd_CS"/>
</dbReference>
<dbReference type="InterPro" id="IPR001715">
    <property type="entry name" value="CH_dom"/>
</dbReference>
<dbReference type="InterPro" id="IPR036872">
    <property type="entry name" value="CH_dom_sf"/>
</dbReference>
<dbReference type="InterPro" id="IPR012315">
    <property type="entry name" value="KASH"/>
</dbReference>
<dbReference type="InterPro" id="IPR018159">
    <property type="entry name" value="Spectrin/alpha-actinin"/>
</dbReference>
<dbReference type="InterPro" id="IPR002017">
    <property type="entry name" value="Spectrin_repeat"/>
</dbReference>
<dbReference type="InterPro" id="IPR057057">
    <property type="entry name" value="Spectrin_SYNE1"/>
</dbReference>
<dbReference type="InterPro" id="IPR056887">
    <property type="entry name" value="SYNE1/2_dom"/>
</dbReference>
<dbReference type="PANTHER" id="PTHR14514:SF4">
    <property type="entry name" value="NESPRIN-2"/>
    <property type="match status" value="1"/>
</dbReference>
<dbReference type="PANTHER" id="PTHR14514">
    <property type="entry name" value="PKA ANCHORING PROTEIN"/>
    <property type="match status" value="1"/>
</dbReference>
<dbReference type="Pfam" id="PF00307">
    <property type="entry name" value="CH"/>
    <property type="match status" value="2"/>
</dbReference>
<dbReference type="Pfam" id="PF10541">
    <property type="entry name" value="KASH"/>
    <property type="match status" value="1"/>
</dbReference>
<dbReference type="Pfam" id="PF00435">
    <property type="entry name" value="Spectrin"/>
    <property type="match status" value="3"/>
</dbReference>
<dbReference type="Pfam" id="PF25034">
    <property type="entry name" value="Spectrin_SYNE1"/>
    <property type="match status" value="2"/>
</dbReference>
<dbReference type="Pfam" id="PF25035">
    <property type="entry name" value="SYNE1"/>
    <property type="match status" value="1"/>
</dbReference>
<dbReference type="SMART" id="SM00033">
    <property type="entry name" value="CH"/>
    <property type="match status" value="2"/>
</dbReference>
<dbReference type="SMART" id="SM01249">
    <property type="entry name" value="KASH"/>
    <property type="match status" value="1"/>
</dbReference>
<dbReference type="SMART" id="SM00150">
    <property type="entry name" value="SPEC"/>
    <property type="match status" value="18"/>
</dbReference>
<dbReference type="SUPFAM" id="SSF47576">
    <property type="entry name" value="Calponin-homology domain, CH-domain"/>
    <property type="match status" value="1"/>
</dbReference>
<dbReference type="SUPFAM" id="SSF46966">
    <property type="entry name" value="Spectrin repeat"/>
    <property type="match status" value="18"/>
</dbReference>
<dbReference type="PROSITE" id="PS00019">
    <property type="entry name" value="ACTININ_1"/>
    <property type="match status" value="1"/>
</dbReference>
<dbReference type="PROSITE" id="PS00020">
    <property type="entry name" value="ACTININ_2"/>
    <property type="match status" value="1"/>
</dbReference>
<dbReference type="PROSITE" id="PS50021">
    <property type="entry name" value="CH"/>
    <property type="match status" value="2"/>
</dbReference>
<dbReference type="PROSITE" id="PS51049">
    <property type="entry name" value="KASH"/>
    <property type="match status" value="1"/>
</dbReference>
<protein>
    <recommendedName>
        <fullName evidence="28">Nesprin-2</fullName>
    </recommendedName>
    <alternativeName>
        <fullName>KASH domain-containing protein 2</fullName>
        <shortName>KASH2</shortName>
    </alternativeName>
    <alternativeName>
        <fullName>Nuclear envelope spectrin repeat protein 2</fullName>
    </alternativeName>
    <alternativeName>
        <fullName>Nucleus and actin connecting element protein</fullName>
        <shortName>Protein NUANCE</shortName>
    </alternativeName>
    <alternativeName>
        <fullName>Synaptic nuclear envelope protein 2</fullName>
        <shortName>Syne-2</shortName>
    </alternativeName>
</protein>
<accession>Q8WXH0</accession>
<accession>B4DND7</accession>
<accession>B4DPR6</accession>
<accession>I6XXQ5</accession>
<accession>Q540G1</accession>
<accession>Q86YP9</accession>
<accession>Q8N1S3</accession>
<accession>Q8NF49</accession>
<accession>Q8TER7</accession>
<accession>Q8WWW3</accession>
<accession>Q8WWW4</accession>
<accession>Q8WWW5</accession>
<accession>Q8WXH1</accession>
<accession>Q9NU50</accession>
<accession>Q9UFQ4</accession>
<accession>Q9Y2L4</accession>
<accession>Q9Y4R1</accession>
<feature type="chain" id="PRO_0000163592" description="Nesprin-2">
    <location>
        <begin position="1"/>
        <end position="6885"/>
    </location>
</feature>
<feature type="topological domain" description="Cytoplasmic" evidence="4">
    <location>
        <begin position="1"/>
        <end position="6834"/>
    </location>
</feature>
<feature type="transmembrane region" description="Helical; Anchor for type IV membrane protein" evidence="4">
    <location>
        <begin position="6835"/>
        <end position="6855"/>
    </location>
</feature>
<feature type="topological domain" description="Perinuclear space" evidence="4">
    <location>
        <begin position="6856"/>
        <end position="6885"/>
    </location>
</feature>
<feature type="domain" description="Calponin-homology (CH) 1" evidence="3">
    <location>
        <begin position="31"/>
        <end position="136"/>
    </location>
</feature>
<feature type="domain" description="Calponin-homology (CH) 2" evidence="3">
    <location>
        <begin position="181"/>
        <end position="286"/>
    </location>
</feature>
<feature type="repeat" description="Spectrin 1">
    <location>
        <begin position="297"/>
        <end position="378"/>
    </location>
</feature>
<feature type="repeat" description="Spectrin 2">
    <location>
        <begin position="379"/>
        <end position="472"/>
    </location>
</feature>
<feature type="repeat" description="Spectrin 3">
    <location>
        <begin position="473"/>
        <end position="575"/>
    </location>
</feature>
<feature type="repeat" description="Spectrin 4">
    <location>
        <begin position="576"/>
        <end position="680"/>
    </location>
</feature>
<feature type="repeat" description="Spectrin 5">
    <location>
        <begin position="735"/>
        <end position="838"/>
    </location>
</feature>
<feature type="repeat" description="Spectrin 6">
    <location>
        <begin position="839"/>
        <end position="932"/>
    </location>
</feature>
<feature type="repeat" description="Spectrin 7">
    <location>
        <begin position="933"/>
        <end position="1034"/>
    </location>
</feature>
<feature type="repeat" description="Spectrin 8">
    <location>
        <begin position="1121"/>
        <end position="1212"/>
    </location>
</feature>
<feature type="repeat" description="Spectrin 9">
    <location>
        <begin position="1263"/>
        <end position="1323"/>
    </location>
</feature>
<feature type="repeat" description="Spectrin 10">
    <location>
        <begin position="1324"/>
        <end position="1419"/>
    </location>
</feature>
<feature type="repeat" description="Spectrin 11">
    <location>
        <begin position="1420"/>
        <end position="1524"/>
    </location>
</feature>
<feature type="repeat" description="Spectrin 12">
    <location>
        <begin position="1525"/>
        <end position="1636"/>
    </location>
</feature>
<feature type="repeat" description="Spectrin 13">
    <location>
        <begin position="1637"/>
        <end position="1738"/>
    </location>
</feature>
<feature type="repeat" description="Spectrin 14">
    <location>
        <begin position="1739"/>
        <end position="1830"/>
    </location>
</feature>
<feature type="repeat" description="Spectrin 15">
    <location>
        <begin position="1831"/>
        <end position="1938"/>
    </location>
</feature>
<feature type="repeat" description="Spectrin 16">
    <location>
        <begin position="1939"/>
        <end position="2036"/>
    </location>
</feature>
<feature type="repeat" description="Spectrin 17">
    <location>
        <begin position="2037"/>
        <end position="2132"/>
    </location>
</feature>
<feature type="repeat" description="Spectrin 18">
    <location>
        <begin position="2133"/>
        <end position="2243"/>
    </location>
</feature>
<feature type="repeat" description="Spectrin 19">
    <location>
        <begin position="2244"/>
        <end position="2360"/>
    </location>
</feature>
<feature type="repeat" description="Spectrin 20">
    <location>
        <begin position="2432"/>
        <end position="2513"/>
    </location>
</feature>
<feature type="repeat" description="Spectrin 21">
    <location>
        <begin position="2514"/>
        <end position="2620"/>
    </location>
</feature>
<feature type="repeat" description="Spectrin 22">
    <location>
        <begin position="2621"/>
        <end position="2717"/>
    </location>
</feature>
<feature type="repeat" description="Spectrin 23">
    <location>
        <begin position="2718"/>
        <end position="2831"/>
    </location>
</feature>
<feature type="repeat" description="Spectrin 24">
    <location>
        <begin position="2832"/>
        <end position="2933"/>
    </location>
</feature>
<feature type="repeat" description="Spectrin 25">
    <location>
        <begin position="2934"/>
        <end position="3036"/>
    </location>
</feature>
<feature type="repeat" description="Spectrin 26">
    <location>
        <begin position="3037"/>
        <end position="3142"/>
    </location>
</feature>
<feature type="repeat" description="Spectrin 27">
    <location>
        <begin position="3143"/>
        <end position="3248"/>
    </location>
</feature>
<feature type="repeat" description="Spectrin 28">
    <location>
        <begin position="3249"/>
        <end position="3352"/>
    </location>
</feature>
<feature type="repeat" description="Spectrin 29">
    <location>
        <begin position="3353"/>
        <end position="3465"/>
    </location>
</feature>
<feature type="repeat" description="Spectrin 30">
    <location>
        <begin position="3466"/>
        <end position="3573"/>
    </location>
</feature>
<feature type="repeat" description="Spectrin 31">
    <location>
        <begin position="3574"/>
        <end position="3679"/>
    </location>
</feature>
<feature type="repeat" description="Spectrin 32">
    <location>
        <begin position="3680"/>
        <end position="3777"/>
    </location>
</feature>
<feature type="repeat" description="Spectrin 33">
    <location>
        <begin position="3778"/>
        <end position="3880"/>
    </location>
</feature>
<feature type="repeat" description="Spectrin 34">
    <location>
        <begin position="3881"/>
        <end position="3986"/>
    </location>
</feature>
<feature type="repeat" description="Spectrin 35">
    <location>
        <begin position="3987"/>
        <end position="4086"/>
    </location>
</feature>
<feature type="repeat" description="Spectrin 36">
    <location>
        <begin position="4229"/>
        <end position="4348"/>
    </location>
</feature>
<feature type="repeat" description="Spectrin 37">
    <location>
        <begin position="4520"/>
        <end position="4639"/>
    </location>
</feature>
<feature type="repeat" description="Spectrin 38">
    <location>
        <begin position="4640"/>
        <end position="4727"/>
    </location>
</feature>
<feature type="repeat" description="Spectrin 39">
    <location>
        <begin position="4728"/>
        <end position="4837"/>
    </location>
</feature>
<feature type="repeat" description="Spectrin 40">
    <location>
        <begin position="4838"/>
        <end position="4943"/>
    </location>
</feature>
<feature type="repeat" description="Spectrin 41">
    <location>
        <begin position="4944"/>
        <end position="5051"/>
    </location>
</feature>
<feature type="repeat" description="Spectrin 42">
    <location>
        <begin position="5052"/>
        <end position="5164"/>
    </location>
</feature>
<feature type="repeat" description="Spectrin 43">
    <location>
        <begin position="5165"/>
        <end position="5266"/>
    </location>
</feature>
<feature type="repeat" description="Spectrin 44">
    <location>
        <begin position="5267"/>
        <end position="5391"/>
    </location>
</feature>
<feature type="repeat" description="Spectrin 45">
    <location>
        <begin position="5392"/>
        <end position="5487"/>
    </location>
</feature>
<feature type="repeat" description="Spectrin 46">
    <location>
        <begin position="5488"/>
        <end position="5589"/>
    </location>
</feature>
<feature type="repeat" description="Spectrin 47">
    <location>
        <begin position="5590"/>
        <end position="5704"/>
    </location>
</feature>
<feature type="repeat" description="Spectrin 48">
    <location>
        <begin position="5705"/>
        <end position="5799"/>
    </location>
</feature>
<feature type="repeat" description="Spectrin 49">
    <location>
        <begin position="5800"/>
        <end position="5907"/>
    </location>
</feature>
<feature type="repeat" description="Spectrin 50">
    <location>
        <begin position="5908"/>
        <end position="6017"/>
    </location>
</feature>
<feature type="repeat" description="Spectrin 51">
    <location>
        <begin position="6018"/>
        <end position="6135"/>
    </location>
</feature>
<feature type="repeat" description="Spectrin 52">
    <location>
        <begin position="6136"/>
        <end position="6243"/>
    </location>
</feature>
<feature type="repeat" description="Spectrin 53">
    <location>
        <begin position="6244"/>
        <end position="6355"/>
    </location>
</feature>
<feature type="repeat" description="Spectrin 54">
    <location>
        <begin position="6461"/>
        <end position="6549"/>
    </location>
</feature>
<feature type="repeat" description="Spectrin 55">
    <location>
        <begin position="6550"/>
        <end position="6665"/>
    </location>
</feature>
<feature type="repeat" description="Spectrin 56">
    <location>
        <begin position="6666"/>
        <end position="6782"/>
    </location>
</feature>
<feature type="domain" description="KASH" evidence="4">
    <location>
        <begin position="6826"/>
        <end position="6885"/>
    </location>
</feature>
<feature type="region of interest" description="Actin-binding">
    <location>
        <begin position="1"/>
        <end position="286"/>
    </location>
</feature>
<feature type="region of interest" description="Disordered" evidence="5">
    <location>
        <begin position="1042"/>
        <end position="1084"/>
    </location>
</feature>
<feature type="region of interest" description="Disordered" evidence="5">
    <location>
        <begin position="2368"/>
        <end position="2394"/>
    </location>
</feature>
<feature type="region of interest" description="Disordered" evidence="5">
    <location>
        <begin position="4073"/>
        <end position="4162"/>
    </location>
</feature>
<feature type="region of interest" description="Disordered" evidence="5">
    <location>
        <begin position="4184"/>
        <end position="4232"/>
    </location>
</feature>
<feature type="region of interest" description="Disordered" evidence="5">
    <location>
        <begin position="4335"/>
        <end position="4363"/>
    </location>
</feature>
<feature type="region of interest" description="Disordered" evidence="5">
    <location>
        <begin position="4416"/>
        <end position="4448"/>
    </location>
</feature>
<feature type="region of interest" description="Disordered" evidence="5">
    <location>
        <begin position="6354"/>
        <end position="6508"/>
    </location>
</feature>
<feature type="region of interest" description="Disordered" evidence="5">
    <location>
        <begin position="6769"/>
        <end position="6824"/>
    </location>
</feature>
<feature type="region of interest" description="Sufficient for interaction with SUN2" evidence="15">
    <location>
        <begin position="6872"/>
        <end position="6885"/>
    </location>
</feature>
<feature type="coiled-coil region" evidence="2">
    <location>
        <begin position="297"/>
        <end position="6782"/>
    </location>
</feature>
<feature type="compositionally biased region" description="Polar residues" evidence="5">
    <location>
        <begin position="1042"/>
        <end position="1059"/>
    </location>
</feature>
<feature type="compositionally biased region" description="Basic and acidic residues" evidence="5">
    <location>
        <begin position="2368"/>
        <end position="2382"/>
    </location>
</feature>
<feature type="compositionally biased region" description="Polar residues" evidence="5">
    <location>
        <begin position="2383"/>
        <end position="2393"/>
    </location>
</feature>
<feature type="compositionally biased region" description="Basic and acidic residues" evidence="5">
    <location>
        <begin position="4073"/>
        <end position="4083"/>
    </location>
</feature>
<feature type="compositionally biased region" description="Basic and acidic residues" evidence="5">
    <location>
        <begin position="4093"/>
        <end position="4102"/>
    </location>
</feature>
<feature type="compositionally biased region" description="Basic and acidic residues" evidence="5">
    <location>
        <begin position="4122"/>
        <end position="4134"/>
    </location>
</feature>
<feature type="compositionally biased region" description="Basic and acidic residues" evidence="5">
    <location>
        <begin position="4144"/>
        <end position="4155"/>
    </location>
</feature>
<feature type="compositionally biased region" description="Basic and acidic residues" evidence="5">
    <location>
        <begin position="4335"/>
        <end position="4356"/>
    </location>
</feature>
<feature type="compositionally biased region" description="Polar residues" evidence="5">
    <location>
        <begin position="4421"/>
        <end position="4434"/>
    </location>
</feature>
<feature type="compositionally biased region" description="Acidic residues" evidence="5">
    <location>
        <begin position="6354"/>
        <end position="6367"/>
    </location>
</feature>
<feature type="compositionally biased region" description="Basic and acidic residues" evidence="5">
    <location>
        <begin position="6368"/>
        <end position="6384"/>
    </location>
</feature>
<feature type="compositionally biased region" description="Basic and acidic residues" evidence="5">
    <location>
        <begin position="6463"/>
        <end position="6474"/>
    </location>
</feature>
<feature type="compositionally biased region" description="Pro residues" evidence="5">
    <location>
        <begin position="6477"/>
        <end position="6489"/>
    </location>
</feature>
<feature type="compositionally biased region" description="Low complexity" evidence="5">
    <location>
        <begin position="6490"/>
        <end position="6499"/>
    </location>
</feature>
<feature type="modified residue" description="Phosphoserine" evidence="37">
    <location>
        <position position="841"/>
    </location>
</feature>
<feature type="modified residue" description="N6-acetyllysine" evidence="33">
    <location>
        <position position="955"/>
    </location>
</feature>
<feature type="modified residue" description="Phosphoserine" evidence="35 36">
    <location>
        <position position="2781"/>
    </location>
</feature>
<feature type="modified residue" description="Phosphoserine" evidence="32 34">
    <location>
        <position position="4108"/>
    </location>
</feature>
<feature type="modified residue" description="Phosphoserine" evidence="37">
    <location>
        <position position="5785"/>
    </location>
</feature>
<feature type="modified residue" description="Phosphoserine" evidence="35 37">
    <location>
        <position position="6361"/>
    </location>
</feature>
<feature type="modified residue" description="Phosphoserine" evidence="1">
    <location>
        <position position="6384"/>
    </location>
</feature>
<feature type="modified residue" description="Phosphoserine" evidence="1">
    <location>
        <position position="6411"/>
    </location>
</feature>
<feature type="modified residue" description="Phosphoserine" evidence="1">
    <location>
        <position position="6428"/>
    </location>
</feature>
<feature type="modified residue" description="Phosphoserine" evidence="1">
    <location>
        <position position="6429"/>
    </location>
</feature>
<feature type="modified residue" description="Phosphoserine" evidence="1">
    <location>
        <position position="6430"/>
    </location>
</feature>
<feature type="modified residue" description="Phosphoserine" evidence="37">
    <location>
        <position position="6459"/>
    </location>
</feature>
<feature type="disulfide bond" description="Interchain (with C-563 in SUN2)" evidence="15 30">
    <location>
        <position position="6862"/>
    </location>
</feature>
<feature type="splice variant" id="VSP_007158" description="In isoform 6." evidence="23 27">
    <location>
        <begin position="1"/>
        <end position="6469"/>
    </location>
</feature>
<feature type="splice variant" id="VSP_057483" description="In isoform 11." evidence="25">
    <location>
        <begin position="1"/>
        <end position="6434"/>
    </location>
</feature>
<feature type="splice variant" id="VSP_007157" description="In isoform 5 and isoform 12." evidence="23 25">
    <location>
        <begin position="1"/>
        <end position="6366"/>
    </location>
</feature>
<feature type="splice variant" id="VSP_057484" description="In isoform 10." evidence="23">
    <location>
        <begin position="1"/>
        <end position="6217"/>
    </location>
</feature>
<feature type="splice variant" id="VSP_007156" description="In isoform 4." evidence="23">
    <location>
        <begin position="1"/>
        <end position="6122"/>
    </location>
</feature>
<feature type="splice variant" id="VSP_007155" description="In isoform 3." evidence="25">
    <location>
        <begin position="1"/>
        <end position="6030"/>
    </location>
</feature>
<feature type="splice variant" id="VSP_057485" description="In isoform 13." evidence="26">
    <location>
        <begin position="1"/>
        <end position="5850"/>
    </location>
</feature>
<feature type="splice variant" id="VSP_007154" description="In isoform 7." evidence="23">
    <location>
        <begin position="1"/>
        <end position="3638"/>
    </location>
</feature>
<feature type="splice variant" id="VSP_007161" description="In isoform 8." evidence="26">
    <original>DVDVVDPDEKSIMTYVAQFLQYS</original>
    <variation>DAWRSSALYRIYMPGTVSCASYL</variation>
    <location>
        <begin position="263"/>
        <end position="285"/>
    </location>
</feature>
<feature type="splice variant" id="VSP_007159" description="In isoform 9." evidence="24">
    <original>DVDVV</original>
    <variation>AYKNF</variation>
    <location>
        <begin position="263"/>
        <end position="267"/>
    </location>
</feature>
<feature type="splice variant" id="VSP_007160" description="In isoform 9." evidence="24">
    <location>
        <begin position="268"/>
        <end position="6885"/>
    </location>
</feature>
<feature type="splice variant" id="VSP_007162" description="In isoform 8." evidence="26">
    <location>
        <begin position="286"/>
        <end position="6885"/>
    </location>
</feature>
<feature type="splice variant" id="VSP_007163" description="In isoform 7." evidence="23">
    <original>Q</original>
    <variation>QDSKCFRSGPRPNIYVSYYVTVIQ</variation>
    <location>
        <position position="3828"/>
    </location>
</feature>
<feature type="splice variant" id="VSP_057486" description="In isoform 13." evidence="26">
    <original>IK</original>
    <variation>MQ</variation>
    <location>
        <begin position="5851"/>
        <end position="5852"/>
    </location>
</feature>
<feature type="splice variant" id="VSP_057487" description="In isoform 11." evidence="25">
    <original>EEGPYYSAL</original>
    <variation>MTTKTLKAS</variation>
    <location>
        <begin position="6435"/>
        <end position="6443"/>
    </location>
</feature>
<feature type="splice variant" id="VSP_007164" description="In isoform 2, isoform 5 and isoform 12." evidence="22 23 25">
    <original>S</original>
    <variation>SDVEIPENPEAYLKMTTKTLKASS</variation>
    <location>
        <position position="6444"/>
    </location>
</feature>
<feature type="splice variant" id="VSP_007165" description="In isoform 5 and isoform 6." evidence="23 27">
    <original>Q</original>
    <variation>QGSKTRPRSDVLFFK</variation>
    <location>
        <position position="6664"/>
    </location>
</feature>
<feature type="splice variant" id="VSP_007166" description="In isoform 2, isoform 6 and isoform 10." evidence="22 23 27">
    <location>
        <position position="6801"/>
    </location>
</feature>
<feature type="sequence variant" id="VAR_027947" description="In dbSNP:rs2275017.">
    <original>P</original>
    <variation>S</variation>
    <location>
        <position position="8"/>
    </location>
</feature>
<feature type="sequence variant" id="VAR_050238" description="In dbSNP:rs35554503.">
    <original>S</original>
    <variation>R</variation>
    <location>
        <position position="432"/>
    </location>
</feature>
<feature type="sequence variant" id="VAR_027948" description="In dbSNP:rs9944035.">
    <original>I</original>
    <variation>T</variation>
    <location>
        <position position="574"/>
    </location>
</feature>
<feature type="sequence variant" id="VAR_050239" description="In dbSNP:rs17751301.">
    <original>R</original>
    <variation>W</variation>
    <location>
        <position position="1393"/>
    </location>
</feature>
<feature type="sequence variant" id="VAR_050240" description="In dbSNP:rs4902264." evidence="6">
    <original>M</original>
    <variation>T</variation>
    <location>
        <position position="1969"/>
    </location>
</feature>
<feature type="sequence variant" id="VAR_050241" description="In dbSNP:rs4027402." evidence="6">
    <original>A</original>
    <variation>V</variation>
    <location>
        <position position="2284"/>
    </location>
</feature>
<feature type="sequence variant" id="VAR_050242" description="In dbSNP:rs34625768.">
    <original>A</original>
    <variation>E</variation>
    <location>
        <position position="2347"/>
    </location>
</feature>
<feature type="sequence variant" id="VAR_027949" description="In dbSNP:rs4027404.">
    <original>N</original>
    <variation>S</variation>
    <location>
        <position position="2358"/>
    </location>
</feature>
<feature type="sequence variant" id="VAR_050243" description="In dbSNP:rs7157465.">
    <original>S</original>
    <variation>G</variation>
    <location>
        <position position="2359"/>
    </location>
</feature>
<feature type="sequence variant" id="VAR_050244" description="In dbSNP:rs4027404." evidence="6">
    <original>S</original>
    <variation>N</variation>
    <location>
        <position position="2359"/>
    </location>
</feature>
<feature type="sequence variant" id="VAR_027950" description="In dbSNP:rs4027405.">
    <original>A</original>
    <variation>T</variation>
    <location>
        <position position="2394"/>
    </location>
</feature>
<feature type="sequence variant" id="VAR_050245" description="In dbSNP:rs4027405." evidence="6">
    <original>A</original>
    <variation>T</variation>
    <location>
        <position position="2395"/>
    </location>
</feature>
<feature type="sequence variant" id="VAR_050246" description="In dbSNP:rs34393543.">
    <original>V</original>
    <variation>G</variation>
    <location>
        <position position="2490"/>
    </location>
</feature>
<feature type="sequence variant" id="VAR_050247" description="In dbSNP:rs11628107.">
    <original>I</original>
    <variation>V</variation>
    <location>
        <position position="2564"/>
    </location>
</feature>
<feature type="sequence variant" id="VAR_027951" description="In dbSNP:rs1890908.">
    <original>G</original>
    <variation>S</variation>
    <location>
        <position position="2801"/>
    </location>
</feature>
<feature type="sequence variant" id="VAR_050248" description="In dbSNP:rs1890908." evidence="6">
    <original>S</original>
    <variation>G</variation>
    <location>
        <position position="2802"/>
    </location>
</feature>
<feature type="sequence variant" id="VAR_050249" description="In dbSNP:rs3829767." evidence="6">
    <original>I</original>
    <variation>V</variation>
    <location>
        <position position="2942"/>
    </location>
</feature>
<feature type="sequence variant" id="VAR_050250" description="In dbSNP:rs34843668.">
    <original>E</original>
    <variation>D</variation>
    <location>
        <position position="3026"/>
    </location>
</feature>
<feature type="sequence variant" id="VAR_050251" description="In dbSNP:rs11847087.">
    <original>N</original>
    <variation>S</variation>
    <location>
        <position position="3130"/>
    </location>
</feature>
<feature type="sequence variant" id="VAR_050252" description="In dbSNP:rs8010911." evidence="6">
    <original>D</original>
    <variation>H</variation>
    <location>
        <position position="3253"/>
    </location>
</feature>
<feature type="sequence variant" id="VAR_050253" description="In dbSNP:rs8010699." evidence="6">
    <original>H</original>
    <variation>R</variation>
    <location>
        <position position="3309"/>
    </location>
</feature>
<feature type="sequence variant" id="VAR_050254" description="In dbSNP:rs35203186.">
    <original>K</original>
    <variation>Q</variation>
    <location>
        <position position="3523"/>
    </location>
</feature>
<feature type="sequence variant" id="VAR_050255" description="In dbSNP:rs10137972.">
    <original>N</original>
    <variation>H</variation>
    <location>
        <position position="3982"/>
    </location>
</feature>
<feature type="sequence variant" id="VAR_050256" description="In dbSNP:rs17101661.">
    <original>R</original>
    <variation>H</variation>
    <location>
        <position position="4041"/>
    </location>
</feature>
<feature type="sequence variant" id="VAR_050257" description="In dbSNP:rs17766354.">
    <original>P</original>
    <variation>A</variation>
    <location>
        <position position="4912"/>
    </location>
</feature>
<feature type="sequence variant" id="VAR_050258" description="In dbSNP:rs12881815.">
    <original>E</original>
    <variation>K</variation>
    <location>
        <position position="4913"/>
    </location>
</feature>
<feature type="sequence variant" id="VAR_050259" description="In dbSNP:rs2039475.">
    <original>H</original>
    <variation>Y</variation>
    <location>
        <position position="5086"/>
    </location>
</feature>
<feature type="sequence variant" id="VAR_050260" description="In dbSNP:rs10151658." evidence="6 7">
    <original>L</original>
    <variation>M</variation>
    <location>
        <position position="5186"/>
    </location>
</feature>
<feature type="sequence variant" id="VAR_050261" description="In dbSNP:rs17179194.">
    <original>D</original>
    <variation>N</variation>
    <location>
        <position position="5547"/>
    </location>
</feature>
<feature type="sequence variant" id="VAR_036255" description="In a breast cancer sample; somatic mutation." evidence="9">
    <original>V</original>
    <variation>I</variation>
    <location>
        <position position="5940"/>
    </location>
</feature>
<feature type="sequence variant" id="VAR_050262" description="In dbSNP:rs2275014.">
    <original>A</original>
    <variation>V</variation>
    <location>
        <position position="6155"/>
    </location>
</feature>
<feature type="sequence variant" id="VAR_036256" description="In a breast cancer sample; somatic mutation." evidence="9">
    <original>Y</original>
    <variation>C</variation>
    <location>
        <position position="6200"/>
    </location>
</feature>
<feature type="sequence variant" id="VAR_062977" description="In EDMD5; dbSNP:rs36215895." evidence="10">
    <original>T</original>
    <variation>M</variation>
    <location>
        <position position="6211"/>
    </location>
</feature>
<feature type="sequence variant" id="VAR_050263" description="In dbSNP:rs35315070.">
    <original>K</original>
    <variation>E</variation>
    <location>
        <position position="6681"/>
    </location>
</feature>
<feature type="sequence variant" id="VAR_050264" description="In dbSNP:rs35700578.">
    <original>R</original>
    <variation>W</variation>
    <location>
        <position position="6697"/>
    </location>
</feature>
<feature type="mutagenesis site" description="Disrupts interaction with SUN2." evidence="15">
    <original>L</original>
    <variation>A</variation>
    <location>
        <position position="6876"/>
    </location>
</feature>
<feature type="mutagenesis site" description="Disrupts interaction with SUN2." evidence="15">
    <original>Y</original>
    <variation>A</variation>
    <location>
        <position position="6878"/>
    </location>
</feature>
<feature type="mutagenesis site" description="Disrupts interaction with SUN2." evidence="15">
    <original>P</original>
    <variation>A</variation>
    <location>
        <position position="6883"/>
    </location>
</feature>
<feature type="sequence conflict" description="In Ref. 3; AAN60443." evidence="28" ref="3">
    <location>
        <position position="668"/>
    </location>
</feature>
<feature type="sequence conflict" description="In Ref. 3; AAN60443." evidence="28" ref="3">
    <original>M</original>
    <variation>T</variation>
    <location>
        <position position="1087"/>
    </location>
</feature>
<feature type="sequence conflict" description="In Ref. 1; AAL33548." evidence="28" ref="1">
    <original>F</original>
    <variation>S</variation>
    <location>
        <position position="3115"/>
    </location>
</feature>
<feature type="sequence conflict" description="In Ref. 1; AAL33548." evidence="28" ref="1">
    <original>E</original>
    <variation>G</variation>
    <location>
        <position position="3193"/>
    </location>
</feature>
<feature type="sequence conflict" description="In Ref. 2; AAL33802." evidence="28" ref="2">
    <original>Q</original>
    <variation>L</variation>
    <location>
        <position position="3951"/>
    </location>
</feature>
<feature type="sequence conflict" description="In Ref. 3; AAN60443." evidence="28" ref="3">
    <original>W</original>
    <variation>Q</variation>
    <location>
        <position position="4001"/>
    </location>
</feature>
<feature type="sequence conflict" description="In Ref. 2; AAL33802 and 3; AAN60443." evidence="28" ref="2 3">
    <original>S</original>
    <variation>F</variation>
    <location>
        <position position="4158"/>
    </location>
</feature>
<feature type="sequence conflict" description="In Ref. 2; AAL33802 and 3; AAN60443." evidence="28" ref="2 3">
    <original>I</original>
    <variation>T</variation>
    <location>
        <position position="4209"/>
    </location>
</feature>
<feature type="sequence conflict" description="In Ref. 2; AAL33802 and 3; AAN60443." evidence="28" ref="2 3">
    <original>E</original>
    <variation>Q</variation>
    <location>
        <position position="4327"/>
    </location>
</feature>
<feature type="sequence conflict" description="In Ref. 2; AAL33802 and 3; AAN60443." evidence="28" ref="2 3">
    <original>N</original>
    <variation>K</variation>
    <location>
        <position position="4418"/>
    </location>
</feature>
<feature type="sequence conflict" description="In Ref. 1; AAL33548." evidence="28" ref="1">
    <original>E</original>
    <variation>G</variation>
    <location>
        <position position="4713"/>
    </location>
</feature>
<feature type="sequence conflict" description="In Ref. 2; AAL33802 and 3; AAN60443." evidence="28" ref="2 3">
    <original>P</original>
    <variation>S</variation>
    <location>
        <position position="4733"/>
    </location>
</feature>
<feature type="sequence conflict" description="In Ref. 2; AAL33802 and 3; AAN60443." evidence="28" ref="2 3">
    <original>N</original>
    <variation>I</variation>
    <location>
        <position position="4807"/>
    </location>
</feature>
<feature type="sequence conflict" description="In Ref. 2; AAL33802 and 3; AAN60443." evidence="28" ref="2 3">
    <original>S</original>
    <variation>P</variation>
    <location>
        <position position="4826"/>
    </location>
</feature>
<feature type="sequence conflict" description="In Ref. 2; AAL33802 and 3; AAN60443." evidence="28" ref="2 3">
    <original>E</original>
    <variation>D</variation>
    <location>
        <position position="5166"/>
    </location>
</feature>
<feature type="sequence conflict" description="In Ref. 2; AAL33802 and 3; AAN60443." evidence="28" ref="2 3">
    <original>T</original>
    <variation>A</variation>
    <location>
        <position position="5646"/>
    </location>
</feature>
<feature type="sequence conflict" description="In Ref. 2; AAL33802 and 3; AAN60443." evidence="28" ref="2 3">
    <original>K</original>
    <variation>R</variation>
    <location>
        <position position="5727"/>
    </location>
</feature>
<feature type="helix" evidence="39">
    <location>
        <begin position="1425"/>
        <end position="1451"/>
    </location>
</feature>
<feature type="helix" evidence="39">
    <location>
        <begin position="1460"/>
        <end position="1492"/>
    </location>
</feature>
<feature type="helix" evidence="39">
    <location>
        <begin position="1501"/>
        <end position="1556"/>
    </location>
</feature>
<feature type="helix" evidence="39">
    <location>
        <begin position="1562"/>
        <end position="1564"/>
    </location>
</feature>
<feature type="helix" evidence="39">
    <location>
        <begin position="1567"/>
        <end position="1586"/>
    </location>
</feature>
<feature type="helix" evidence="39">
    <location>
        <begin position="1588"/>
        <end position="1606"/>
    </location>
</feature>
<feature type="helix" evidence="39">
    <location>
        <begin position="1617"/>
        <end position="1646"/>
    </location>
</feature>
<feature type="turn" evidence="38">
    <location>
        <begin position="6867"/>
        <end position="6870"/>
    </location>
</feature>
<feature type="strand" evidence="38">
    <location>
        <begin position="6871"/>
        <end position="6873"/>
    </location>
</feature>
<feature type="strand" evidence="38">
    <location>
        <begin position="6875"/>
        <end position="6881"/>
    </location>
</feature>
<organism>
    <name type="scientific">Homo sapiens</name>
    <name type="common">Human</name>
    <dbReference type="NCBI Taxonomy" id="9606"/>
    <lineage>
        <taxon>Eukaryota</taxon>
        <taxon>Metazoa</taxon>
        <taxon>Chordata</taxon>
        <taxon>Craniata</taxon>
        <taxon>Vertebrata</taxon>
        <taxon>Euteleostomi</taxon>
        <taxon>Mammalia</taxon>
        <taxon>Eutheria</taxon>
        <taxon>Euarchontoglires</taxon>
        <taxon>Primates</taxon>
        <taxon>Haplorrhini</taxon>
        <taxon>Catarrhini</taxon>
        <taxon>Hominidae</taxon>
        <taxon>Homo</taxon>
    </lineage>
</organism>
<proteinExistence type="evidence at protein level"/>